<sequence>MRHRKSGRQLNRNSSHRQAMFRNMAGSLVRHEIIKTTLPKAKELRRVVEPLITLAKTDSVANRRLAFARTRDNEIVAKLFNELGPRFASRAGGYTRILKCGFRAGDNAPMAYIELVDRSEKAEAAAE</sequence>
<evidence type="ECO:0000255" key="1">
    <source>
        <dbReference type="HAMAP-Rule" id="MF_01368"/>
    </source>
</evidence>
<evidence type="ECO:0000269" key="2">
    <source>
    </source>
</evidence>
<evidence type="ECO:0000269" key="3">
    <source>
    </source>
</evidence>
<evidence type="ECO:0000269" key="4">
    <source>
    </source>
</evidence>
<evidence type="ECO:0000269" key="5">
    <source>
    </source>
</evidence>
<evidence type="ECO:0000269" key="6">
    <source>
    </source>
</evidence>
<evidence type="ECO:0000269" key="7">
    <source>
    </source>
</evidence>
<evidence type="ECO:0000269" key="8">
    <source>
    </source>
</evidence>
<evidence type="ECO:0000269" key="9">
    <source>
    </source>
</evidence>
<evidence type="ECO:0000269" key="10">
    <source>
    </source>
</evidence>
<evidence type="ECO:0000269" key="11">
    <source>
    </source>
</evidence>
<evidence type="ECO:0000269" key="12">
    <source ref="1"/>
</evidence>
<evidence type="ECO:0000303" key="13">
    <source>
    </source>
</evidence>
<evidence type="ECO:0007829" key="14">
    <source>
        <dbReference type="PDB" id="6WNT"/>
    </source>
</evidence>
<evidence type="ECO:0007829" key="15">
    <source>
        <dbReference type="PDB" id="6XZ7"/>
    </source>
</evidence>
<evidence type="ECO:0007829" key="16">
    <source>
        <dbReference type="PDB" id="8CGK"/>
    </source>
</evidence>
<feature type="chain" id="PRO_0000175524" description="Large ribosomal subunit protein bL17">
    <location>
        <begin position="1"/>
        <end position="127"/>
    </location>
</feature>
<feature type="helix" evidence="16">
    <location>
        <begin position="14"/>
        <end position="31"/>
    </location>
</feature>
<feature type="strand" evidence="16">
    <location>
        <begin position="32"/>
        <end position="37"/>
    </location>
</feature>
<feature type="helix" evidence="16">
    <location>
        <begin position="38"/>
        <end position="54"/>
    </location>
</feature>
<feature type="strand" evidence="14">
    <location>
        <begin position="55"/>
        <end position="57"/>
    </location>
</feature>
<feature type="helix" evidence="16">
    <location>
        <begin position="60"/>
        <end position="70"/>
    </location>
</feature>
<feature type="helix" evidence="16">
    <location>
        <begin position="73"/>
        <end position="81"/>
    </location>
</feature>
<feature type="helix" evidence="16">
    <location>
        <begin position="83"/>
        <end position="86"/>
    </location>
</feature>
<feature type="turn" evidence="16">
    <location>
        <begin position="87"/>
        <end position="89"/>
    </location>
</feature>
<feature type="strand" evidence="16">
    <location>
        <begin position="95"/>
        <end position="102"/>
    </location>
</feature>
<feature type="turn" evidence="16">
    <location>
        <begin position="104"/>
        <end position="106"/>
    </location>
</feature>
<feature type="strand" evidence="16">
    <location>
        <begin position="109"/>
        <end position="115"/>
    </location>
</feature>
<feature type="helix" evidence="15">
    <location>
        <begin position="122"/>
        <end position="124"/>
    </location>
</feature>
<name>RL17_ECOLI</name>
<gene>
    <name evidence="1" type="primary">rplQ</name>
    <name type="ordered locus">b3294</name>
    <name type="ordered locus">JW3256</name>
</gene>
<dbReference type="EMBL" id="X02543">
    <property type="protein sequence ID" value="CAA26396.1"/>
    <property type="molecule type" value="Genomic_DNA"/>
</dbReference>
<dbReference type="EMBL" id="J01685">
    <property type="protein sequence ID" value="AAA24578.1"/>
    <property type="molecule type" value="Genomic_DNA"/>
</dbReference>
<dbReference type="EMBL" id="X00766">
    <property type="protein sequence ID" value="CAA25338.1"/>
    <property type="molecule type" value="Genomic_DNA"/>
</dbReference>
<dbReference type="EMBL" id="U18997">
    <property type="protein sequence ID" value="AAA58091.1"/>
    <property type="molecule type" value="Genomic_DNA"/>
</dbReference>
<dbReference type="EMBL" id="U00096">
    <property type="protein sequence ID" value="AAC76319.1"/>
    <property type="molecule type" value="Genomic_DNA"/>
</dbReference>
<dbReference type="EMBL" id="AP009048">
    <property type="protein sequence ID" value="BAE77997.1"/>
    <property type="molecule type" value="Genomic_DNA"/>
</dbReference>
<dbReference type="PIR" id="B22884">
    <property type="entry name" value="R5EC17"/>
</dbReference>
<dbReference type="RefSeq" id="NP_417753.1">
    <property type="nucleotide sequence ID" value="NC_000913.3"/>
</dbReference>
<dbReference type="RefSeq" id="WP_001216368.1">
    <property type="nucleotide sequence ID" value="NZ_STEB01000038.1"/>
</dbReference>
<dbReference type="PDB" id="2J28">
    <property type="method" value="EM"/>
    <property type="resolution" value="8.00 A"/>
    <property type="chains" value="N=1-127"/>
</dbReference>
<dbReference type="PDB" id="2RDO">
    <property type="method" value="EM"/>
    <property type="resolution" value="9.10 A"/>
    <property type="chains" value="N=1-127"/>
</dbReference>
<dbReference type="PDB" id="3BBX">
    <property type="method" value="EM"/>
    <property type="resolution" value="10.00 A"/>
    <property type="chains" value="N=1-127"/>
</dbReference>
<dbReference type="PDB" id="3J5L">
    <property type="method" value="EM"/>
    <property type="resolution" value="6.60 A"/>
    <property type="chains" value="N=1-120"/>
</dbReference>
<dbReference type="PDB" id="3J7Z">
    <property type="method" value="EM"/>
    <property type="resolution" value="3.90 A"/>
    <property type="chains" value="N=1-127"/>
</dbReference>
<dbReference type="PDB" id="3J8G">
    <property type="method" value="EM"/>
    <property type="resolution" value="5.00 A"/>
    <property type="chains" value="N=1-127"/>
</dbReference>
<dbReference type="PDB" id="3J9Y">
    <property type="method" value="EM"/>
    <property type="resolution" value="3.90 A"/>
    <property type="chains" value="N=1-127"/>
</dbReference>
<dbReference type="PDB" id="3J9Z">
    <property type="method" value="EM"/>
    <property type="resolution" value="3.60 A"/>
    <property type="chains" value="LJ=1-127"/>
</dbReference>
<dbReference type="PDB" id="3JA1">
    <property type="method" value="EM"/>
    <property type="resolution" value="3.60 A"/>
    <property type="chains" value="LP=1-127"/>
</dbReference>
<dbReference type="PDB" id="3JBU">
    <property type="method" value="EM"/>
    <property type="resolution" value="3.64 A"/>
    <property type="chains" value="n=1-127"/>
</dbReference>
<dbReference type="PDB" id="3JBV">
    <property type="method" value="EM"/>
    <property type="resolution" value="3.32 A"/>
    <property type="chains" value="n=1-127"/>
</dbReference>
<dbReference type="PDB" id="3JCD">
    <property type="method" value="EM"/>
    <property type="resolution" value="3.70 A"/>
    <property type="chains" value="N=1-127"/>
</dbReference>
<dbReference type="PDB" id="3JCE">
    <property type="method" value="EM"/>
    <property type="resolution" value="3.20 A"/>
    <property type="chains" value="N=1-127"/>
</dbReference>
<dbReference type="PDB" id="3JCJ">
    <property type="method" value="EM"/>
    <property type="resolution" value="3.70 A"/>
    <property type="chains" value="M=1-127"/>
</dbReference>
<dbReference type="PDB" id="3JCN">
    <property type="method" value="EM"/>
    <property type="resolution" value="4.60 A"/>
    <property type="chains" value="N=1-127"/>
</dbReference>
<dbReference type="PDB" id="4CSU">
    <property type="method" value="EM"/>
    <property type="resolution" value="5.50 A"/>
    <property type="chains" value="N=1-127"/>
</dbReference>
<dbReference type="PDB" id="4U1U">
    <property type="method" value="X-ray"/>
    <property type="resolution" value="2.95 A"/>
    <property type="chains" value="BN/DN=1-120"/>
</dbReference>
<dbReference type="PDB" id="4U1V">
    <property type="method" value="X-ray"/>
    <property type="resolution" value="3.00 A"/>
    <property type="chains" value="BN/DN=1-120"/>
</dbReference>
<dbReference type="PDB" id="4U20">
    <property type="method" value="X-ray"/>
    <property type="resolution" value="2.90 A"/>
    <property type="chains" value="BN/DN=1-120"/>
</dbReference>
<dbReference type="PDB" id="4U24">
    <property type="method" value="X-ray"/>
    <property type="resolution" value="2.90 A"/>
    <property type="chains" value="BN/DN=1-120"/>
</dbReference>
<dbReference type="PDB" id="4U25">
    <property type="method" value="X-ray"/>
    <property type="resolution" value="2.90 A"/>
    <property type="chains" value="BN/DN=1-120"/>
</dbReference>
<dbReference type="PDB" id="4U26">
    <property type="method" value="X-ray"/>
    <property type="resolution" value="2.80 A"/>
    <property type="chains" value="BN/DN=1-120"/>
</dbReference>
<dbReference type="PDB" id="4U27">
    <property type="method" value="X-ray"/>
    <property type="resolution" value="2.80 A"/>
    <property type="chains" value="BN/DN=1-120"/>
</dbReference>
<dbReference type="PDB" id="4UY8">
    <property type="method" value="EM"/>
    <property type="resolution" value="3.80 A"/>
    <property type="chains" value="N=1-120"/>
</dbReference>
<dbReference type="PDB" id="4V47">
    <property type="method" value="EM"/>
    <property type="resolution" value="12.30 A"/>
    <property type="chains" value="AL=1-127"/>
</dbReference>
<dbReference type="PDB" id="4V48">
    <property type="method" value="EM"/>
    <property type="resolution" value="11.50 A"/>
    <property type="chains" value="AL=1-127"/>
</dbReference>
<dbReference type="PDB" id="4V4H">
    <property type="method" value="X-ray"/>
    <property type="resolution" value="3.46 A"/>
    <property type="chains" value="BN/DN=1-127"/>
</dbReference>
<dbReference type="PDB" id="4V4Q">
    <property type="method" value="X-ray"/>
    <property type="resolution" value="3.46 A"/>
    <property type="chains" value="BN/DN=1-127"/>
</dbReference>
<dbReference type="PDB" id="4V4V">
    <property type="method" value="EM"/>
    <property type="resolution" value="15.00 A"/>
    <property type="chains" value="BL=3-116"/>
</dbReference>
<dbReference type="PDB" id="4V4W">
    <property type="method" value="EM"/>
    <property type="resolution" value="15.00 A"/>
    <property type="chains" value="BL=3-116"/>
</dbReference>
<dbReference type="PDB" id="4V50">
    <property type="method" value="X-ray"/>
    <property type="resolution" value="3.22 A"/>
    <property type="chains" value="BN/DN=1-127"/>
</dbReference>
<dbReference type="PDB" id="4V52">
    <property type="method" value="X-ray"/>
    <property type="resolution" value="3.21 A"/>
    <property type="chains" value="BN/DN=1-127"/>
</dbReference>
<dbReference type="PDB" id="4V53">
    <property type="method" value="X-ray"/>
    <property type="resolution" value="3.54 A"/>
    <property type="chains" value="BN/DN=1-127"/>
</dbReference>
<dbReference type="PDB" id="4V54">
    <property type="method" value="X-ray"/>
    <property type="resolution" value="3.30 A"/>
    <property type="chains" value="BN/DN=1-127"/>
</dbReference>
<dbReference type="PDB" id="4V55">
    <property type="method" value="X-ray"/>
    <property type="resolution" value="4.00 A"/>
    <property type="chains" value="BN/DN=1-127"/>
</dbReference>
<dbReference type="PDB" id="4V56">
    <property type="method" value="X-ray"/>
    <property type="resolution" value="3.93 A"/>
    <property type="chains" value="BN/DN=1-127"/>
</dbReference>
<dbReference type="PDB" id="4V57">
    <property type="method" value="X-ray"/>
    <property type="resolution" value="3.50 A"/>
    <property type="chains" value="BN/DN=1-127"/>
</dbReference>
<dbReference type="PDB" id="4V5B">
    <property type="method" value="X-ray"/>
    <property type="resolution" value="3.74 A"/>
    <property type="chains" value="AN/CN=1-127"/>
</dbReference>
<dbReference type="PDB" id="4V5H">
    <property type="method" value="EM"/>
    <property type="resolution" value="5.80 A"/>
    <property type="chains" value="BN=1-120"/>
</dbReference>
<dbReference type="PDB" id="4V5Y">
    <property type="method" value="X-ray"/>
    <property type="resolution" value="4.45 A"/>
    <property type="chains" value="BN/DN=1-127"/>
</dbReference>
<dbReference type="PDB" id="4V64">
    <property type="method" value="X-ray"/>
    <property type="resolution" value="3.50 A"/>
    <property type="chains" value="BN/DN=1-127"/>
</dbReference>
<dbReference type="PDB" id="4V65">
    <property type="method" value="EM"/>
    <property type="resolution" value="9.00 A"/>
    <property type="chains" value="BG=1-127"/>
</dbReference>
<dbReference type="PDB" id="4V66">
    <property type="method" value="EM"/>
    <property type="resolution" value="9.00 A"/>
    <property type="chains" value="BG=1-127"/>
</dbReference>
<dbReference type="PDB" id="4V69">
    <property type="method" value="EM"/>
    <property type="resolution" value="6.70 A"/>
    <property type="chains" value="BN=1-120"/>
</dbReference>
<dbReference type="PDB" id="4V6C">
    <property type="method" value="X-ray"/>
    <property type="resolution" value="3.19 A"/>
    <property type="chains" value="BN/DN=1-127"/>
</dbReference>
<dbReference type="PDB" id="4V6D">
    <property type="method" value="X-ray"/>
    <property type="resolution" value="3.81 A"/>
    <property type="chains" value="BN/DN=1-127"/>
</dbReference>
<dbReference type="PDB" id="4V6E">
    <property type="method" value="X-ray"/>
    <property type="resolution" value="3.71 A"/>
    <property type="chains" value="BN/DN=1-127"/>
</dbReference>
<dbReference type="PDB" id="4V6K">
    <property type="method" value="EM"/>
    <property type="resolution" value="8.25 A"/>
    <property type="chains" value="AO=1-127"/>
</dbReference>
<dbReference type="PDB" id="4V6L">
    <property type="method" value="EM"/>
    <property type="resolution" value="13.20 A"/>
    <property type="chains" value="BO=1-127"/>
</dbReference>
<dbReference type="PDB" id="4V6M">
    <property type="method" value="EM"/>
    <property type="resolution" value="7.10 A"/>
    <property type="chains" value="BN=1-127"/>
</dbReference>
<dbReference type="PDB" id="4V6N">
    <property type="method" value="EM"/>
    <property type="resolution" value="12.10 A"/>
    <property type="chains" value="AP=1-127"/>
</dbReference>
<dbReference type="PDB" id="4V6O">
    <property type="method" value="EM"/>
    <property type="resolution" value="14.70 A"/>
    <property type="chains" value="BP=1-127"/>
</dbReference>
<dbReference type="PDB" id="4V6P">
    <property type="method" value="EM"/>
    <property type="resolution" value="13.50 A"/>
    <property type="chains" value="BP=1-127"/>
</dbReference>
<dbReference type="PDB" id="4V6Q">
    <property type="method" value="EM"/>
    <property type="resolution" value="11.50 A"/>
    <property type="chains" value="BP=1-127"/>
</dbReference>
<dbReference type="PDB" id="4V6R">
    <property type="method" value="EM"/>
    <property type="resolution" value="11.50 A"/>
    <property type="chains" value="BP=1-127"/>
</dbReference>
<dbReference type="PDB" id="4V6S">
    <property type="method" value="EM"/>
    <property type="resolution" value="13.10 A"/>
    <property type="chains" value="AP=1-127"/>
</dbReference>
<dbReference type="PDB" id="4V6T">
    <property type="method" value="EM"/>
    <property type="resolution" value="8.30 A"/>
    <property type="chains" value="BN=1-120"/>
</dbReference>
<dbReference type="PDB" id="4V6V">
    <property type="method" value="EM"/>
    <property type="resolution" value="9.80 A"/>
    <property type="chains" value="BR=1-127"/>
</dbReference>
<dbReference type="PDB" id="4V6Y">
    <property type="method" value="EM"/>
    <property type="resolution" value="12.00 A"/>
    <property type="chains" value="BN=1-120"/>
</dbReference>
<dbReference type="PDB" id="4V6Z">
    <property type="method" value="EM"/>
    <property type="resolution" value="12.00 A"/>
    <property type="chains" value="BN=1-120"/>
</dbReference>
<dbReference type="PDB" id="4V70">
    <property type="method" value="EM"/>
    <property type="resolution" value="17.00 A"/>
    <property type="chains" value="BN=1-120"/>
</dbReference>
<dbReference type="PDB" id="4V71">
    <property type="method" value="EM"/>
    <property type="resolution" value="20.00 A"/>
    <property type="chains" value="BN=1-120"/>
</dbReference>
<dbReference type="PDB" id="4V72">
    <property type="method" value="EM"/>
    <property type="resolution" value="13.00 A"/>
    <property type="chains" value="BN=1-120"/>
</dbReference>
<dbReference type="PDB" id="4V73">
    <property type="method" value="EM"/>
    <property type="resolution" value="15.00 A"/>
    <property type="chains" value="BN=1-120"/>
</dbReference>
<dbReference type="PDB" id="4V74">
    <property type="method" value="EM"/>
    <property type="resolution" value="17.00 A"/>
    <property type="chains" value="BN=1-120"/>
</dbReference>
<dbReference type="PDB" id="4V75">
    <property type="method" value="EM"/>
    <property type="resolution" value="12.00 A"/>
    <property type="chains" value="BN=1-120"/>
</dbReference>
<dbReference type="PDB" id="4V76">
    <property type="method" value="EM"/>
    <property type="resolution" value="17.00 A"/>
    <property type="chains" value="BN=1-120"/>
</dbReference>
<dbReference type="PDB" id="4V77">
    <property type="method" value="EM"/>
    <property type="resolution" value="17.00 A"/>
    <property type="chains" value="BN=1-120"/>
</dbReference>
<dbReference type="PDB" id="4V78">
    <property type="method" value="EM"/>
    <property type="resolution" value="20.00 A"/>
    <property type="chains" value="BN=1-120"/>
</dbReference>
<dbReference type="PDB" id="4V79">
    <property type="method" value="EM"/>
    <property type="resolution" value="15.00 A"/>
    <property type="chains" value="BN=1-120"/>
</dbReference>
<dbReference type="PDB" id="4V7A">
    <property type="method" value="EM"/>
    <property type="resolution" value="9.00 A"/>
    <property type="chains" value="BN=1-120"/>
</dbReference>
<dbReference type="PDB" id="4V7B">
    <property type="method" value="EM"/>
    <property type="resolution" value="6.80 A"/>
    <property type="chains" value="BN=1-127"/>
</dbReference>
<dbReference type="PDB" id="4V7C">
    <property type="method" value="EM"/>
    <property type="resolution" value="7.60 A"/>
    <property type="chains" value="BP=1-127"/>
</dbReference>
<dbReference type="PDB" id="4V7D">
    <property type="method" value="EM"/>
    <property type="resolution" value="7.60 A"/>
    <property type="chains" value="AQ=1-127"/>
</dbReference>
<dbReference type="PDB" id="4V7I">
    <property type="method" value="EM"/>
    <property type="resolution" value="9.60 A"/>
    <property type="chains" value="AN=1-127"/>
</dbReference>
<dbReference type="PDB" id="4V7S">
    <property type="method" value="X-ray"/>
    <property type="resolution" value="3.25 A"/>
    <property type="chains" value="BN/DN=1-120"/>
</dbReference>
<dbReference type="PDB" id="4V7T">
    <property type="method" value="X-ray"/>
    <property type="resolution" value="3.19 A"/>
    <property type="chains" value="BN/DN=1-120"/>
</dbReference>
<dbReference type="PDB" id="4V7U">
    <property type="method" value="X-ray"/>
    <property type="resolution" value="3.10 A"/>
    <property type="chains" value="BN/DN=1-120"/>
</dbReference>
<dbReference type="PDB" id="4V7V">
    <property type="method" value="X-ray"/>
    <property type="resolution" value="3.29 A"/>
    <property type="chains" value="BN/DN=1-120"/>
</dbReference>
<dbReference type="PDB" id="4V85">
    <property type="method" value="X-ray"/>
    <property type="resolution" value="3.20 A"/>
    <property type="chains" value="BR=1-127"/>
</dbReference>
<dbReference type="PDB" id="4V89">
    <property type="method" value="X-ray"/>
    <property type="resolution" value="3.70 A"/>
    <property type="chains" value="BR=1-127"/>
</dbReference>
<dbReference type="PDB" id="4V9C">
    <property type="method" value="X-ray"/>
    <property type="resolution" value="3.30 A"/>
    <property type="chains" value="BN/DN=1-127"/>
</dbReference>
<dbReference type="PDB" id="4V9D">
    <property type="method" value="X-ray"/>
    <property type="resolution" value="3.00 A"/>
    <property type="chains" value="CN/DN=1-120"/>
</dbReference>
<dbReference type="PDB" id="4V9O">
    <property type="method" value="X-ray"/>
    <property type="resolution" value="2.90 A"/>
    <property type="chains" value="AN/CN/EN/GN=1-127"/>
</dbReference>
<dbReference type="PDB" id="4V9P">
    <property type="method" value="X-ray"/>
    <property type="resolution" value="2.90 A"/>
    <property type="chains" value="AN/CN/EN/GN=1-127"/>
</dbReference>
<dbReference type="PDB" id="4WF1">
    <property type="method" value="X-ray"/>
    <property type="resolution" value="3.09 A"/>
    <property type="chains" value="BN/DN=1-120"/>
</dbReference>
<dbReference type="PDB" id="4WOI">
    <property type="method" value="X-ray"/>
    <property type="resolution" value="3.00 A"/>
    <property type="chains" value="BN/CN=1-127"/>
</dbReference>
<dbReference type="PDB" id="4WWW">
    <property type="method" value="X-ray"/>
    <property type="resolution" value="3.10 A"/>
    <property type="chains" value="RN/YN=1-120"/>
</dbReference>
<dbReference type="PDB" id="4YBB">
    <property type="method" value="X-ray"/>
    <property type="resolution" value="2.10 A"/>
    <property type="chains" value="CO/DO=1-125"/>
</dbReference>
<dbReference type="PDB" id="5ADY">
    <property type="method" value="EM"/>
    <property type="resolution" value="4.50 A"/>
    <property type="chains" value="N=1-127"/>
</dbReference>
<dbReference type="PDB" id="5AFI">
    <property type="method" value="EM"/>
    <property type="resolution" value="2.90 A"/>
    <property type="chains" value="N=1-127"/>
</dbReference>
<dbReference type="PDB" id="5AKA">
    <property type="method" value="EM"/>
    <property type="resolution" value="5.70 A"/>
    <property type="chains" value="N=1-127"/>
</dbReference>
<dbReference type="PDB" id="5GAD">
    <property type="method" value="EM"/>
    <property type="resolution" value="3.70 A"/>
    <property type="chains" value="O=1-127"/>
</dbReference>
<dbReference type="PDB" id="5GAE">
    <property type="method" value="EM"/>
    <property type="resolution" value="3.33 A"/>
    <property type="chains" value="O=1-127"/>
</dbReference>
<dbReference type="PDB" id="5GAF">
    <property type="method" value="EM"/>
    <property type="resolution" value="4.30 A"/>
    <property type="chains" value="O=1-125"/>
</dbReference>
<dbReference type="PDB" id="5GAG">
    <property type="method" value="EM"/>
    <property type="resolution" value="3.80 A"/>
    <property type="chains" value="O=1-127"/>
</dbReference>
<dbReference type="PDB" id="5GAH">
    <property type="method" value="EM"/>
    <property type="resolution" value="3.80 A"/>
    <property type="chains" value="O=1-127"/>
</dbReference>
<dbReference type="PDB" id="5H5U">
    <property type="method" value="EM"/>
    <property type="resolution" value="3.00 A"/>
    <property type="chains" value="O=1-127"/>
</dbReference>
<dbReference type="PDB" id="5IQR">
    <property type="method" value="EM"/>
    <property type="resolution" value="3.00 A"/>
    <property type="chains" value="N=1-127"/>
</dbReference>
<dbReference type="PDB" id="5IT8">
    <property type="method" value="X-ray"/>
    <property type="resolution" value="3.12 A"/>
    <property type="chains" value="CO/DO=1-125"/>
</dbReference>
<dbReference type="PDB" id="5J5B">
    <property type="method" value="X-ray"/>
    <property type="resolution" value="2.80 A"/>
    <property type="chains" value="CO/DO=1-125"/>
</dbReference>
<dbReference type="PDB" id="5J7L">
    <property type="method" value="X-ray"/>
    <property type="resolution" value="3.00 A"/>
    <property type="chains" value="CO/DO=1-125"/>
</dbReference>
<dbReference type="PDB" id="5J88">
    <property type="method" value="X-ray"/>
    <property type="resolution" value="3.32 A"/>
    <property type="chains" value="CO/DO=1-127"/>
</dbReference>
<dbReference type="PDB" id="5J8A">
    <property type="method" value="X-ray"/>
    <property type="resolution" value="3.10 A"/>
    <property type="chains" value="CO/DO=1-125"/>
</dbReference>
<dbReference type="PDB" id="5J91">
    <property type="method" value="X-ray"/>
    <property type="resolution" value="2.96 A"/>
    <property type="chains" value="CO/DO=1-125"/>
</dbReference>
<dbReference type="PDB" id="5JC9">
    <property type="method" value="X-ray"/>
    <property type="resolution" value="3.03 A"/>
    <property type="chains" value="CO/DO=1-125"/>
</dbReference>
<dbReference type="PDB" id="5JTE">
    <property type="method" value="EM"/>
    <property type="resolution" value="3.60 A"/>
    <property type="chains" value="BN=1-127"/>
</dbReference>
<dbReference type="PDB" id="5JU8">
    <property type="method" value="EM"/>
    <property type="resolution" value="3.60 A"/>
    <property type="chains" value="BN=1-127"/>
</dbReference>
<dbReference type="PDB" id="5KCR">
    <property type="method" value="EM"/>
    <property type="resolution" value="3.60 A"/>
    <property type="chains" value="1R=1-127"/>
</dbReference>
<dbReference type="PDB" id="5KCS">
    <property type="method" value="EM"/>
    <property type="resolution" value="3.90 A"/>
    <property type="chains" value="1R=1-127"/>
</dbReference>
<dbReference type="PDB" id="5KPS">
    <property type="method" value="EM"/>
    <property type="resolution" value="3.90 A"/>
    <property type="chains" value="N=1-127"/>
</dbReference>
<dbReference type="PDB" id="5KPV">
    <property type="method" value="EM"/>
    <property type="resolution" value="4.10 A"/>
    <property type="chains" value="M=1-127"/>
</dbReference>
<dbReference type="PDB" id="5KPW">
    <property type="method" value="EM"/>
    <property type="resolution" value="3.90 A"/>
    <property type="chains" value="M=1-127"/>
</dbReference>
<dbReference type="PDB" id="5KPX">
    <property type="method" value="EM"/>
    <property type="resolution" value="3.90 A"/>
    <property type="chains" value="M=1-127"/>
</dbReference>
<dbReference type="PDB" id="5L3P">
    <property type="method" value="EM"/>
    <property type="resolution" value="3.70 A"/>
    <property type="chains" value="R=1-127"/>
</dbReference>
<dbReference type="PDB" id="5LZA">
    <property type="method" value="EM"/>
    <property type="resolution" value="3.60 A"/>
    <property type="chains" value="N=1-120"/>
</dbReference>
<dbReference type="PDB" id="5LZB">
    <property type="method" value="EM"/>
    <property type="resolution" value="5.30 A"/>
    <property type="chains" value="N=1-120"/>
</dbReference>
<dbReference type="PDB" id="5LZC">
    <property type="method" value="EM"/>
    <property type="resolution" value="4.80 A"/>
    <property type="chains" value="N=1-120"/>
</dbReference>
<dbReference type="PDB" id="5LZD">
    <property type="method" value="EM"/>
    <property type="resolution" value="3.40 A"/>
    <property type="chains" value="N=1-120"/>
</dbReference>
<dbReference type="PDB" id="5LZE">
    <property type="method" value="EM"/>
    <property type="resolution" value="3.50 A"/>
    <property type="chains" value="N=1-120"/>
</dbReference>
<dbReference type="PDB" id="5LZF">
    <property type="method" value="EM"/>
    <property type="resolution" value="4.60 A"/>
    <property type="chains" value="N=1-120"/>
</dbReference>
<dbReference type="PDB" id="5MDV">
    <property type="method" value="EM"/>
    <property type="resolution" value="2.97 A"/>
    <property type="chains" value="N=1-127"/>
</dbReference>
<dbReference type="PDB" id="5MDW">
    <property type="method" value="EM"/>
    <property type="resolution" value="3.06 A"/>
    <property type="chains" value="N=1-127"/>
</dbReference>
<dbReference type="PDB" id="5MDY">
    <property type="method" value="EM"/>
    <property type="resolution" value="3.35 A"/>
    <property type="chains" value="N=1-127"/>
</dbReference>
<dbReference type="PDB" id="5MDZ">
    <property type="method" value="EM"/>
    <property type="resolution" value="3.10 A"/>
    <property type="chains" value="N=1-127"/>
</dbReference>
<dbReference type="PDB" id="5MGP">
    <property type="method" value="EM"/>
    <property type="resolution" value="3.10 A"/>
    <property type="chains" value="N=1-120"/>
</dbReference>
<dbReference type="PDB" id="5NCO">
    <property type="method" value="EM"/>
    <property type="resolution" value="4.80 A"/>
    <property type="chains" value="O=1-125"/>
</dbReference>
<dbReference type="PDB" id="5NP6">
    <property type="method" value="EM"/>
    <property type="resolution" value="3.60 A"/>
    <property type="chains" value="l=1-120"/>
</dbReference>
<dbReference type="PDB" id="5NWY">
    <property type="method" value="EM"/>
    <property type="resolution" value="2.93 A"/>
    <property type="chains" value="a=1-127"/>
</dbReference>
<dbReference type="PDB" id="5O2R">
    <property type="method" value="EM"/>
    <property type="resolution" value="3.40 A"/>
    <property type="chains" value="N=1-120"/>
</dbReference>
<dbReference type="PDB" id="5U4I">
    <property type="method" value="EM"/>
    <property type="resolution" value="3.50 A"/>
    <property type="chains" value="O=1-127"/>
</dbReference>
<dbReference type="PDB" id="5U9F">
    <property type="method" value="EM"/>
    <property type="resolution" value="3.20 A"/>
    <property type="chains" value="16=1-127"/>
</dbReference>
<dbReference type="PDB" id="5U9G">
    <property type="method" value="EM"/>
    <property type="resolution" value="3.20 A"/>
    <property type="chains" value="16=1-127"/>
</dbReference>
<dbReference type="PDB" id="5UYK">
    <property type="method" value="EM"/>
    <property type="resolution" value="3.90 A"/>
    <property type="chains" value="16=1-120"/>
</dbReference>
<dbReference type="PDB" id="5UYL">
    <property type="method" value="EM"/>
    <property type="resolution" value="3.60 A"/>
    <property type="chains" value="16=1-120"/>
</dbReference>
<dbReference type="PDB" id="5UYM">
    <property type="method" value="EM"/>
    <property type="resolution" value="3.20 A"/>
    <property type="chains" value="16=1-120"/>
</dbReference>
<dbReference type="PDB" id="5UYN">
    <property type="method" value="EM"/>
    <property type="resolution" value="4.00 A"/>
    <property type="chains" value="16=1-120"/>
</dbReference>
<dbReference type="PDB" id="5UYP">
    <property type="method" value="EM"/>
    <property type="resolution" value="3.90 A"/>
    <property type="chains" value="16=1-120"/>
</dbReference>
<dbReference type="PDB" id="5UYQ">
    <property type="method" value="EM"/>
    <property type="resolution" value="3.80 A"/>
    <property type="chains" value="16=1-120"/>
</dbReference>
<dbReference type="PDB" id="5WDT">
    <property type="method" value="EM"/>
    <property type="resolution" value="3.00 A"/>
    <property type="chains" value="N=1-119"/>
</dbReference>
<dbReference type="PDB" id="5WE4">
    <property type="method" value="EM"/>
    <property type="resolution" value="3.10 A"/>
    <property type="chains" value="N=1-119"/>
</dbReference>
<dbReference type="PDB" id="5WE6">
    <property type="method" value="EM"/>
    <property type="resolution" value="3.40 A"/>
    <property type="chains" value="N=1-119"/>
</dbReference>
<dbReference type="PDB" id="5WF0">
    <property type="method" value="EM"/>
    <property type="resolution" value="3.60 A"/>
    <property type="chains" value="N=1-119"/>
</dbReference>
<dbReference type="PDB" id="5WFK">
    <property type="method" value="EM"/>
    <property type="resolution" value="3.40 A"/>
    <property type="chains" value="N=1-119"/>
</dbReference>
<dbReference type="PDB" id="5WFS">
    <property type="method" value="EM"/>
    <property type="resolution" value="3.00 A"/>
    <property type="chains" value="N=1-119"/>
</dbReference>
<dbReference type="PDB" id="6BU8">
    <property type="method" value="EM"/>
    <property type="resolution" value="3.50 A"/>
    <property type="chains" value="16=1-120"/>
</dbReference>
<dbReference type="PDB" id="6BY1">
    <property type="method" value="X-ray"/>
    <property type="resolution" value="3.94 A"/>
    <property type="chains" value="CN/DN=1-121"/>
</dbReference>
<dbReference type="PDB" id="6C4I">
    <property type="method" value="EM"/>
    <property type="resolution" value="3.24 A"/>
    <property type="chains" value="O=1-127"/>
</dbReference>
<dbReference type="PDB" id="6DNC">
    <property type="method" value="EM"/>
    <property type="resolution" value="3.70 A"/>
    <property type="chains" value="R=1-127"/>
</dbReference>
<dbReference type="PDB" id="6ENF">
    <property type="method" value="EM"/>
    <property type="resolution" value="3.20 A"/>
    <property type="chains" value="N=1-120"/>
</dbReference>
<dbReference type="PDB" id="6ENJ">
    <property type="method" value="EM"/>
    <property type="resolution" value="3.70 A"/>
    <property type="chains" value="N=1-120"/>
</dbReference>
<dbReference type="PDB" id="6ENU">
    <property type="method" value="EM"/>
    <property type="resolution" value="3.10 A"/>
    <property type="chains" value="N=1-120"/>
</dbReference>
<dbReference type="PDB" id="6GBZ">
    <property type="method" value="EM"/>
    <property type="resolution" value="3.80 A"/>
    <property type="chains" value="N=1-120"/>
</dbReference>
<dbReference type="PDB" id="6GC0">
    <property type="method" value="EM"/>
    <property type="resolution" value="3.80 A"/>
    <property type="chains" value="N=1-120"/>
</dbReference>
<dbReference type="PDB" id="6GC4">
    <property type="method" value="EM"/>
    <property type="resolution" value="4.30 A"/>
    <property type="chains" value="N=1-120"/>
</dbReference>
<dbReference type="PDB" id="6GC6">
    <property type="method" value="EM"/>
    <property type="resolution" value="4.30 A"/>
    <property type="chains" value="N=1-120"/>
</dbReference>
<dbReference type="PDB" id="6GC7">
    <property type="method" value="EM"/>
    <property type="resolution" value="4.30 A"/>
    <property type="chains" value="N=1-120"/>
</dbReference>
<dbReference type="PDB" id="6GC8">
    <property type="method" value="EM"/>
    <property type="resolution" value="3.80 A"/>
    <property type="chains" value="N=1-120"/>
</dbReference>
<dbReference type="PDB" id="6GWT">
    <property type="method" value="EM"/>
    <property type="resolution" value="3.80 A"/>
    <property type="chains" value="N=1-120"/>
</dbReference>
<dbReference type="PDB" id="6GXM">
    <property type="method" value="EM"/>
    <property type="resolution" value="3.80 A"/>
    <property type="chains" value="N=1-120"/>
</dbReference>
<dbReference type="PDB" id="6GXN">
    <property type="method" value="EM"/>
    <property type="resolution" value="3.90 A"/>
    <property type="chains" value="N=1-120"/>
</dbReference>
<dbReference type="PDB" id="6GXO">
    <property type="method" value="EM"/>
    <property type="resolution" value="3.90 A"/>
    <property type="chains" value="N=1-120"/>
</dbReference>
<dbReference type="PDB" id="6GXP">
    <property type="method" value="EM"/>
    <property type="resolution" value="4.40 A"/>
    <property type="chains" value="N=1-120"/>
</dbReference>
<dbReference type="PDB" id="6H4N">
    <property type="method" value="EM"/>
    <property type="resolution" value="3.00 A"/>
    <property type="chains" value="N=1-120"/>
</dbReference>
<dbReference type="PDB" id="6H58">
    <property type="method" value="EM"/>
    <property type="resolution" value="7.90 A"/>
    <property type="chains" value="N/NN=1-120"/>
</dbReference>
<dbReference type="PDB" id="6HRM">
    <property type="method" value="EM"/>
    <property type="resolution" value="2.96 A"/>
    <property type="chains" value="N=1-119"/>
</dbReference>
<dbReference type="PDB" id="6I0Y">
    <property type="method" value="EM"/>
    <property type="resolution" value="3.20 A"/>
    <property type="chains" value="N=1-120"/>
</dbReference>
<dbReference type="PDB" id="6I7V">
    <property type="method" value="X-ray"/>
    <property type="resolution" value="2.90 A"/>
    <property type="chains" value="CO/DO=1-120"/>
</dbReference>
<dbReference type="PDB" id="6O9J">
    <property type="method" value="EM"/>
    <property type="resolution" value="3.90 A"/>
    <property type="chains" value="N=1-127"/>
</dbReference>
<dbReference type="PDB" id="6O9K">
    <property type="method" value="EM"/>
    <property type="resolution" value="4.00 A"/>
    <property type="chains" value="N=1-120"/>
</dbReference>
<dbReference type="PDB" id="6OFX">
    <property type="method" value="EM"/>
    <property type="resolution" value="3.30 A"/>
    <property type="chains" value="n=1-120"/>
</dbReference>
<dbReference type="PDB" id="6OG7">
    <property type="method" value="EM"/>
    <property type="resolution" value="3.30 A"/>
    <property type="chains" value="n=1-120"/>
</dbReference>
<dbReference type="PDB" id="6OGF">
    <property type="method" value="EM"/>
    <property type="resolution" value="3.90 A"/>
    <property type="chains" value="n=1-127"/>
</dbReference>
<dbReference type="PDB" id="6OGG">
    <property type="method" value="EM"/>
    <property type="resolution" value="4.20 A"/>
    <property type="chains" value="n=1-127"/>
</dbReference>
<dbReference type="PDB" id="6OGI">
    <property type="method" value="EM"/>
    <property type="resolution" value="3.40 A"/>
    <property type="chains" value="n=1-127"/>
</dbReference>
<dbReference type="PDB" id="6OM6">
    <property type="method" value="EM"/>
    <property type="resolution" value="3.10 A"/>
    <property type="chains" value="N=1-127"/>
</dbReference>
<dbReference type="PDB" id="6ORE">
    <property type="method" value="EM"/>
    <property type="resolution" value="2.90 A"/>
    <property type="chains" value="N=1-119"/>
</dbReference>
<dbReference type="PDB" id="6ORL">
    <property type="method" value="EM"/>
    <property type="resolution" value="3.50 A"/>
    <property type="chains" value="N=1-119"/>
</dbReference>
<dbReference type="PDB" id="6OSK">
    <property type="method" value="EM"/>
    <property type="resolution" value="3.60 A"/>
    <property type="chains" value="N=1-119"/>
</dbReference>
<dbReference type="PDB" id="6OSQ">
    <property type="method" value="EM"/>
    <property type="resolution" value="3.50 A"/>
    <property type="chains" value="N=1-119"/>
</dbReference>
<dbReference type="PDB" id="6OST">
    <property type="method" value="EM"/>
    <property type="resolution" value="4.20 A"/>
    <property type="chains" value="N=1-119"/>
</dbReference>
<dbReference type="PDB" id="6OT3">
    <property type="method" value="EM"/>
    <property type="resolution" value="3.90 A"/>
    <property type="chains" value="N=1-119"/>
</dbReference>
<dbReference type="PDB" id="6OUO">
    <property type="method" value="EM"/>
    <property type="resolution" value="3.70 A"/>
    <property type="chains" value="N=1-119"/>
</dbReference>
<dbReference type="PDB" id="6PJ6">
    <property type="method" value="EM"/>
    <property type="resolution" value="2.20 A"/>
    <property type="chains" value="V=1-120"/>
</dbReference>
<dbReference type="PDB" id="6Q97">
    <property type="method" value="EM"/>
    <property type="resolution" value="3.90 A"/>
    <property type="chains" value="N=1-119"/>
</dbReference>
<dbReference type="PDB" id="6Q98">
    <property type="method" value="EM"/>
    <property type="resolution" value="4.30 A"/>
    <property type="chains" value="N=1-127"/>
</dbReference>
<dbReference type="PDB" id="6Q9A">
    <property type="method" value="EM"/>
    <property type="resolution" value="3.70 A"/>
    <property type="chains" value="N=1-119"/>
</dbReference>
<dbReference type="PDB" id="6QDW">
    <property type="method" value="EM"/>
    <property type="resolution" value="2.83 A"/>
    <property type="chains" value="n=1-127"/>
</dbReference>
<dbReference type="PDB" id="6QUL">
    <property type="method" value="EM"/>
    <property type="resolution" value="3.00 A"/>
    <property type="chains" value="O=1-127"/>
</dbReference>
<dbReference type="PDB" id="6S0K">
    <property type="method" value="EM"/>
    <property type="resolution" value="3.10 A"/>
    <property type="chains" value="O=1-127"/>
</dbReference>
<dbReference type="PDB" id="6SZS">
    <property type="method" value="EM"/>
    <property type="resolution" value="3.06 A"/>
    <property type="chains" value="N=1-127"/>
</dbReference>
<dbReference type="PDB" id="6TBV">
    <property type="method" value="EM"/>
    <property type="resolution" value="2.70 A"/>
    <property type="chains" value="L171=1-127"/>
</dbReference>
<dbReference type="PDB" id="6TC3">
    <property type="method" value="EM"/>
    <property type="resolution" value="2.70 A"/>
    <property type="chains" value="L171=1-127"/>
</dbReference>
<dbReference type="PDB" id="6U48">
    <property type="method" value="EM"/>
    <property type="resolution" value="2.87 A"/>
    <property type="chains" value="CO=1-120"/>
</dbReference>
<dbReference type="PDB" id="6VU3">
    <property type="method" value="EM"/>
    <property type="resolution" value="3.70 A"/>
    <property type="chains" value="w=1-119"/>
</dbReference>
<dbReference type="PDB" id="6VWL">
    <property type="method" value="EM"/>
    <property type="resolution" value="3.10 A"/>
    <property type="chains" value="L=1-127"/>
</dbReference>
<dbReference type="PDB" id="6VWM">
    <property type="method" value="EM"/>
    <property type="resolution" value="3.40 A"/>
    <property type="chains" value="L=1-127"/>
</dbReference>
<dbReference type="PDB" id="6VWN">
    <property type="method" value="EM"/>
    <property type="resolution" value="3.40 A"/>
    <property type="chains" value="L=1-127"/>
</dbReference>
<dbReference type="PDB" id="6VYQ">
    <property type="method" value="EM"/>
    <property type="resolution" value="3.70 A"/>
    <property type="chains" value="w=1-127"/>
</dbReference>
<dbReference type="PDB" id="6VYR">
    <property type="method" value="EM"/>
    <property type="resolution" value="3.80 A"/>
    <property type="chains" value="w=1-127"/>
</dbReference>
<dbReference type="PDB" id="6VYS">
    <property type="method" value="EM"/>
    <property type="resolution" value="3.70 A"/>
    <property type="chains" value="w=1-127"/>
</dbReference>
<dbReference type="PDB" id="6VYT">
    <property type="method" value="EM"/>
    <property type="resolution" value="14.00 A"/>
    <property type="chains" value="w=1-127"/>
</dbReference>
<dbReference type="PDB" id="6VYU">
    <property type="method" value="EM"/>
    <property type="resolution" value="7.00 A"/>
    <property type="chains" value="w=1-127"/>
</dbReference>
<dbReference type="PDB" id="6VYW">
    <property type="method" value="EM"/>
    <property type="resolution" value="7.00 A"/>
    <property type="chains" value="w=1-127"/>
</dbReference>
<dbReference type="PDB" id="6VYX">
    <property type="method" value="EM"/>
    <property type="resolution" value="9.90 A"/>
    <property type="chains" value="w=1-119"/>
</dbReference>
<dbReference type="PDB" id="6VYY">
    <property type="method" value="EM"/>
    <property type="resolution" value="9.90 A"/>
    <property type="chains" value="w=1-127"/>
</dbReference>
<dbReference type="PDB" id="6VYZ">
    <property type="method" value="EM"/>
    <property type="resolution" value="9.90 A"/>
    <property type="chains" value="w=1-127"/>
</dbReference>
<dbReference type="PDB" id="6VZ2">
    <property type="method" value="EM"/>
    <property type="resolution" value="10.00 A"/>
    <property type="chains" value="w=1-127"/>
</dbReference>
<dbReference type="PDB" id="6VZ3">
    <property type="method" value="EM"/>
    <property type="resolution" value="8.90 A"/>
    <property type="chains" value="w=1-119"/>
</dbReference>
<dbReference type="PDB" id="6VZ5">
    <property type="method" value="EM"/>
    <property type="resolution" value="8.90 A"/>
    <property type="chains" value="w=1-127"/>
</dbReference>
<dbReference type="PDB" id="6VZ7">
    <property type="method" value="EM"/>
    <property type="resolution" value="7.00 A"/>
    <property type="chains" value="w=1-119"/>
</dbReference>
<dbReference type="PDB" id="6VZJ">
    <property type="method" value="EM"/>
    <property type="resolution" value="4.10 A"/>
    <property type="chains" value="w=1-119"/>
</dbReference>
<dbReference type="PDB" id="6WD0">
    <property type="method" value="EM"/>
    <property type="resolution" value="3.00 A"/>
    <property type="chains" value="n=1-120"/>
</dbReference>
<dbReference type="PDB" id="6WD1">
    <property type="method" value="EM"/>
    <property type="resolution" value="3.30 A"/>
    <property type="chains" value="n=1-120"/>
</dbReference>
<dbReference type="PDB" id="6WD2">
    <property type="method" value="EM"/>
    <property type="resolution" value="3.60 A"/>
    <property type="chains" value="n=1-120"/>
</dbReference>
<dbReference type="PDB" id="6WD3">
    <property type="method" value="EM"/>
    <property type="resolution" value="3.60 A"/>
    <property type="chains" value="n=1-120"/>
</dbReference>
<dbReference type="PDB" id="6WD4">
    <property type="method" value="EM"/>
    <property type="resolution" value="3.70 A"/>
    <property type="chains" value="n=1-120"/>
</dbReference>
<dbReference type="PDB" id="6WD5">
    <property type="method" value="EM"/>
    <property type="resolution" value="3.60 A"/>
    <property type="chains" value="n=1-120"/>
</dbReference>
<dbReference type="PDB" id="6WD6">
    <property type="method" value="EM"/>
    <property type="resolution" value="3.70 A"/>
    <property type="chains" value="n=1-120"/>
</dbReference>
<dbReference type="PDB" id="6WD7">
    <property type="method" value="EM"/>
    <property type="resolution" value="3.90 A"/>
    <property type="chains" value="n=1-120"/>
</dbReference>
<dbReference type="PDB" id="6WD8">
    <property type="method" value="EM"/>
    <property type="resolution" value="3.70 A"/>
    <property type="chains" value="n=1-120"/>
</dbReference>
<dbReference type="PDB" id="6WD9">
    <property type="method" value="EM"/>
    <property type="resolution" value="3.70 A"/>
    <property type="chains" value="n=1-120"/>
</dbReference>
<dbReference type="PDB" id="6WDA">
    <property type="method" value="EM"/>
    <property type="resolution" value="3.80 A"/>
    <property type="chains" value="n=1-120"/>
</dbReference>
<dbReference type="PDB" id="6WDB">
    <property type="method" value="EM"/>
    <property type="resolution" value="4.00 A"/>
    <property type="chains" value="n=1-120"/>
</dbReference>
<dbReference type="PDB" id="6WDC">
    <property type="method" value="EM"/>
    <property type="resolution" value="4.20 A"/>
    <property type="chains" value="n=1-120"/>
</dbReference>
<dbReference type="PDB" id="6WDD">
    <property type="method" value="EM"/>
    <property type="resolution" value="3.20 A"/>
    <property type="chains" value="n=1-120"/>
</dbReference>
<dbReference type="PDB" id="6WDE">
    <property type="method" value="EM"/>
    <property type="resolution" value="3.00 A"/>
    <property type="chains" value="n=1-120"/>
</dbReference>
<dbReference type="PDB" id="6WDF">
    <property type="method" value="EM"/>
    <property type="resolution" value="3.30 A"/>
    <property type="chains" value="n=1-120"/>
</dbReference>
<dbReference type="PDB" id="6WDG">
    <property type="method" value="EM"/>
    <property type="resolution" value="3.30 A"/>
    <property type="chains" value="n=1-120"/>
</dbReference>
<dbReference type="PDB" id="6WDH">
    <property type="method" value="EM"/>
    <property type="resolution" value="4.30 A"/>
    <property type="chains" value="n=1-120"/>
</dbReference>
<dbReference type="PDB" id="6WDI">
    <property type="method" value="EM"/>
    <property type="resolution" value="4.00 A"/>
    <property type="chains" value="n=1-120"/>
</dbReference>
<dbReference type="PDB" id="6WDJ">
    <property type="method" value="EM"/>
    <property type="resolution" value="3.70 A"/>
    <property type="chains" value="n=1-120"/>
</dbReference>
<dbReference type="PDB" id="6WDK">
    <property type="method" value="EM"/>
    <property type="resolution" value="3.60 A"/>
    <property type="chains" value="n=1-120"/>
</dbReference>
<dbReference type="PDB" id="6WDL">
    <property type="method" value="EM"/>
    <property type="resolution" value="3.70 A"/>
    <property type="chains" value="n=1-120"/>
</dbReference>
<dbReference type="PDB" id="6WDM">
    <property type="method" value="EM"/>
    <property type="resolution" value="3.60 A"/>
    <property type="chains" value="n=1-120"/>
</dbReference>
<dbReference type="PDB" id="6WNT">
    <property type="method" value="EM"/>
    <property type="resolution" value="3.10 A"/>
    <property type="chains" value="n=1-120"/>
</dbReference>
<dbReference type="PDB" id="6WNV">
    <property type="method" value="EM"/>
    <property type="resolution" value="3.50 A"/>
    <property type="chains" value="n=1-120"/>
</dbReference>
<dbReference type="PDB" id="6WNW">
    <property type="method" value="EM"/>
    <property type="resolution" value="3.20 A"/>
    <property type="chains" value="n=1-120"/>
</dbReference>
<dbReference type="PDB" id="6X6T">
    <property type="method" value="EM"/>
    <property type="resolution" value="3.20 A"/>
    <property type="chains" value="w=1-127"/>
</dbReference>
<dbReference type="PDB" id="6X7F">
    <property type="method" value="EM"/>
    <property type="resolution" value="3.50 A"/>
    <property type="chains" value="w=1-127"/>
</dbReference>
<dbReference type="PDB" id="6X7K">
    <property type="method" value="EM"/>
    <property type="resolution" value="3.10 A"/>
    <property type="chains" value="w=1-127"/>
</dbReference>
<dbReference type="PDB" id="6X9Q">
    <property type="method" value="EM"/>
    <property type="resolution" value="4.80 A"/>
    <property type="chains" value="w=1-127"/>
</dbReference>
<dbReference type="PDB" id="6XDQ">
    <property type="method" value="EM"/>
    <property type="resolution" value="3.70 A"/>
    <property type="chains" value="w=1-127"/>
</dbReference>
<dbReference type="PDB" id="6XDR">
    <property type="method" value="EM"/>
    <property type="resolution" value="4.70 A"/>
    <property type="chains" value="w=1-127"/>
</dbReference>
<dbReference type="PDB" id="6XGF">
    <property type="method" value="EM"/>
    <property type="resolution" value="5.00 A"/>
    <property type="chains" value="w=1-127"/>
</dbReference>
<dbReference type="PDB" id="6XII">
    <property type="method" value="EM"/>
    <property type="resolution" value="7.00 A"/>
    <property type="chains" value="w=1-127"/>
</dbReference>
<dbReference type="PDB" id="6XIJ">
    <property type="method" value="EM"/>
    <property type="resolution" value="8.00 A"/>
    <property type="chains" value="w=1-127"/>
</dbReference>
<dbReference type="PDB" id="6XZ7">
    <property type="method" value="EM"/>
    <property type="resolution" value="2.10 A"/>
    <property type="chains" value="N=1-125"/>
</dbReference>
<dbReference type="PDB" id="6XZA">
    <property type="method" value="EM"/>
    <property type="resolution" value="2.66 A"/>
    <property type="chains" value="N2=1-125"/>
</dbReference>
<dbReference type="PDB" id="6XZB">
    <property type="method" value="EM"/>
    <property type="resolution" value="2.54 A"/>
    <property type="chains" value="N2=1-125"/>
</dbReference>
<dbReference type="PDB" id="6Y69">
    <property type="method" value="EM"/>
    <property type="resolution" value="2.86 A"/>
    <property type="chains" value="N=1-120"/>
</dbReference>
<dbReference type="PDB" id="6YS3">
    <property type="method" value="EM"/>
    <property type="resolution" value="2.58 A"/>
    <property type="chains" value="n=1-127"/>
</dbReference>
<dbReference type="PDB" id="6YSR">
    <property type="method" value="EM"/>
    <property type="resolution" value="3.10 A"/>
    <property type="chains" value="N=1-127"/>
</dbReference>
<dbReference type="PDB" id="6YSS">
    <property type="method" value="EM"/>
    <property type="resolution" value="2.60 A"/>
    <property type="chains" value="N=1-127"/>
</dbReference>
<dbReference type="PDB" id="6YST">
    <property type="method" value="EM"/>
    <property type="resolution" value="3.20 A"/>
    <property type="chains" value="N=1-127"/>
</dbReference>
<dbReference type="PDB" id="6YSU">
    <property type="method" value="EM"/>
    <property type="resolution" value="3.70 A"/>
    <property type="chains" value="N=1-127"/>
</dbReference>
<dbReference type="PDB" id="6ZTJ">
    <property type="method" value="EM"/>
    <property type="resolution" value="3.40 A"/>
    <property type="chains" value="BO=1-127"/>
</dbReference>
<dbReference type="PDB" id="6ZTL">
    <property type="method" value="EM"/>
    <property type="resolution" value="3.50 A"/>
    <property type="chains" value="BO=1-127"/>
</dbReference>
<dbReference type="PDB" id="6ZTM">
    <property type="method" value="EM"/>
    <property type="resolution" value="3.30 A"/>
    <property type="chains" value="BO=1-127"/>
</dbReference>
<dbReference type="PDB" id="6ZTN">
    <property type="method" value="EM"/>
    <property type="resolution" value="3.90 A"/>
    <property type="chains" value="BO=1-127"/>
</dbReference>
<dbReference type="PDB" id="6ZTO">
    <property type="method" value="EM"/>
    <property type="resolution" value="3.00 A"/>
    <property type="chains" value="BO=1-127"/>
</dbReference>
<dbReference type="PDB" id="6ZTP">
    <property type="method" value="EM"/>
    <property type="resolution" value="3.00 A"/>
    <property type="chains" value="BO=1-127"/>
</dbReference>
<dbReference type="PDB" id="6ZU1">
    <property type="method" value="EM"/>
    <property type="resolution" value="3.00 A"/>
    <property type="chains" value="BO=1-127"/>
</dbReference>
<dbReference type="PDB" id="7ABZ">
    <property type="method" value="EM"/>
    <property type="resolution" value="3.21 A"/>
    <property type="chains" value="N=1-120"/>
</dbReference>
<dbReference type="PDB" id="7AC7">
    <property type="method" value="EM"/>
    <property type="resolution" value="3.08 A"/>
    <property type="chains" value="N=1-119"/>
</dbReference>
<dbReference type="PDB" id="7ACJ">
    <property type="method" value="EM"/>
    <property type="resolution" value="3.20 A"/>
    <property type="chains" value="N=1-119"/>
</dbReference>
<dbReference type="PDB" id="7ACR">
    <property type="method" value="EM"/>
    <property type="resolution" value="3.44 A"/>
    <property type="chains" value="N=1-119"/>
</dbReference>
<dbReference type="PDB" id="7B5K">
    <property type="method" value="EM"/>
    <property type="resolution" value="2.90 A"/>
    <property type="chains" value="N=1-118"/>
</dbReference>
<dbReference type="PDB" id="7BL2">
    <property type="method" value="EM"/>
    <property type="resolution" value="3.70 A"/>
    <property type="chains" value="N=1-127"/>
</dbReference>
<dbReference type="PDB" id="7BL3">
    <property type="method" value="EM"/>
    <property type="resolution" value="3.50 A"/>
    <property type="chains" value="N=1-127"/>
</dbReference>
<dbReference type="PDB" id="7BL4">
    <property type="method" value="EM"/>
    <property type="resolution" value="2.40 A"/>
    <property type="chains" value="N=1-127"/>
</dbReference>
<dbReference type="PDB" id="7BL5">
    <property type="method" value="EM"/>
    <property type="resolution" value="3.30 A"/>
    <property type="chains" value="N=1-127"/>
</dbReference>
<dbReference type="PDB" id="7BL6">
    <property type="method" value="EM"/>
    <property type="resolution" value="4.00 A"/>
    <property type="chains" value="N=1-120"/>
</dbReference>
<dbReference type="PDB" id="7BV8">
    <property type="method" value="EM"/>
    <property type="resolution" value="3.14 A"/>
    <property type="chains" value="O=1-127"/>
</dbReference>
<dbReference type="PDB" id="7D6Z">
    <property type="method" value="EM"/>
    <property type="resolution" value="3.40 A"/>
    <property type="chains" value="N=1-127"/>
</dbReference>
<dbReference type="PDB" id="7D80">
    <property type="method" value="EM"/>
    <property type="resolution" value="4.10 A"/>
    <property type="chains" value="m=1-127"/>
</dbReference>
<dbReference type="PDB" id="7JSS">
    <property type="method" value="EM"/>
    <property type="resolution" value="3.70 A"/>
    <property type="chains" value="n=1-120"/>
</dbReference>
<dbReference type="PDB" id="7JSW">
    <property type="method" value="EM"/>
    <property type="resolution" value="3.80 A"/>
    <property type="chains" value="n=1-120"/>
</dbReference>
<dbReference type="PDB" id="7JSZ">
    <property type="method" value="EM"/>
    <property type="resolution" value="3.70 A"/>
    <property type="chains" value="n=1-120"/>
</dbReference>
<dbReference type="PDB" id="7JT1">
    <property type="method" value="EM"/>
    <property type="resolution" value="3.30 A"/>
    <property type="chains" value="n=1-120"/>
</dbReference>
<dbReference type="PDB" id="7JT2">
    <property type="method" value="EM"/>
    <property type="resolution" value="3.50 A"/>
    <property type="chains" value="n=1-120"/>
</dbReference>
<dbReference type="PDB" id="7JT3">
    <property type="method" value="EM"/>
    <property type="resolution" value="3.70 A"/>
    <property type="chains" value="n=1-120"/>
</dbReference>
<dbReference type="PDB" id="7K00">
    <property type="method" value="EM"/>
    <property type="resolution" value="1.98 A"/>
    <property type="chains" value="m=1-127"/>
</dbReference>
<dbReference type="PDB" id="7K50">
    <property type="method" value="EM"/>
    <property type="resolution" value="3.40 A"/>
    <property type="chains" value="n=1-120"/>
</dbReference>
<dbReference type="PDB" id="7K51">
    <property type="method" value="EM"/>
    <property type="resolution" value="3.50 A"/>
    <property type="chains" value="n=1-120"/>
</dbReference>
<dbReference type="PDB" id="7K52">
    <property type="method" value="EM"/>
    <property type="resolution" value="3.40 A"/>
    <property type="chains" value="n=1-120"/>
</dbReference>
<dbReference type="PDB" id="7K53">
    <property type="method" value="EM"/>
    <property type="resolution" value="3.20 A"/>
    <property type="chains" value="n=1-120"/>
</dbReference>
<dbReference type="PDB" id="7K54">
    <property type="method" value="EM"/>
    <property type="resolution" value="3.20 A"/>
    <property type="chains" value="n=1-120"/>
</dbReference>
<dbReference type="PDB" id="7K55">
    <property type="method" value="EM"/>
    <property type="resolution" value="3.30 A"/>
    <property type="chains" value="n=1-120"/>
</dbReference>
<dbReference type="PDB" id="7LV0">
    <property type="method" value="EM"/>
    <property type="resolution" value="3.20 A"/>
    <property type="chains" value="n=1-120"/>
</dbReference>
<dbReference type="PDB" id="7LVK">
    <property type="method" value="EM"/>
    <property type="resolution" value="2.20 A"/>
    <property type="chains" value="V=1-127"/>
</dbReference>
<dbReference type="PDB" id="7M5D">
    <property type="method" value="EM"/>
    <property type="resolution" value="2.80 A"/>
    <property type="chains" value="N=1-119"/>
</dbReference>
<dbReference type="PDB" id="7N1P">
    <property type="method" value="EM"/>
    <property type="resolution" value="2.33 A"/>
    <property type="chains" value="LQ=1-127"/>
</dbReference>
<dbReference type="PDB" id="7N2C">
    <property type="method" value="EM"/>
    <property type="resolution" value="2.72 A"/>
    <property type="chains" value="LQ=1-127"/>
</dbReference>
<dbReference type="PDB" id="7N2U">
    <property type="method" value="EM"/>
    <property type="resolution" value="2.53 A"/>
    <property type="chains" value="LQ=1-127"/>
</dbReference>
<dbReference type="PDB" id="7N2V">
    <property type="method" value="EM"/>
    <property type="resolution" value="2.54 A"/>
    <property type="chains" value="LQ=1-127"/>
</dbReference>
<dbReference type="PDB" id="7N30">
    <property type="method" value="EM"/>
    <property type="resolution" value="2.66 A"/>
    <property type="chains" value="LQ=1-127"/>
</dbReference>
<dbReference type="PDB" id="7N31">
    <property type="method" value="EM"/>
    <property type="resolution" value="2.69 A"/>
    <property type="chains" value="LQ=1-127"/>
</dbReference>
<dbReference type="PDB" id="7NBU">
    <property type="method" value="EM"/>
    <property type="resolution" value="3.11 A"/>
    <property type="chains" value="m=1-118"/>
</dbReference>
<dbReference type="PDB" id="7NWT">
    <property type="method" value="EM"/>
    <property type="resolution" value="2.66 A"/>
    <property type="chains" value="N=1-127"/>
</dbReference>
<dbReference type="PDB" id="7O19">
    <property type="method" value="EM"/>
    <property type="resolution" value="2.90 A"/>
    <property type="chains" value="BN=1-127"/>
</dbReference>
<dbReference type="PDB" id="7O1A">
    <property type="method" value="EM"/>
    <property type="resolution" value="2.40 A"/>
    <property type="chains" value="BN=1-127"/>
</dbReference>
<dbReference type="PDB" id="7O1C">
    <property type="method" value="EM"/>
    <property type="resolution" value="2.60 A"/>
    <property type="chains" value="BN=1-127"/>
</dbReference>
<dbReference type="PDB" id="7ODE">
    <property type="method" value="EM"/>
    <property type="resolution" value="2.84 A"/>
    <property type="chains" value="V=1-127"/>
</dbReference>
<dbReference type="PDB" id="7OIZ">
    <property type="method" value="EM"/>
    <property type="resolution" value="2.90 A"/>
    <property type="chains" value="m=1-127"/>
</dbReference>
<dbReference type="PDB" id="7OJ0">
    <property type="method" value="EM"/>
    <property type="resolution" value="3.50 A"/>
    <property type="chains" value="m=1-127"/>
</dbReference>
<dbReference type="PDB" id="7P3K">
    <property type="method" value="EM"/>
    <property type="resolution" value="2.90 A"/>
    <property type="chains" value="m=1-127"/>
</dbReference>
<dbReference type="PDB" id="7PJS">
    <property type="method" value="EM"/>
    <property type="resolution" value="2.35 A"/>
    <property type="chains" value="N=1-127"/>
</dbReference>
<dbReference type="PDB" id="7PJT">
    <property type="method" value="EM"/>
    <property type="resolution" value="6.00 A"/>
    <property type="chains" value="N=1-127"/>
</dbReference>
<dbReference type="PDB" id="7PJU">
    <property type="method" value="EM"/>
    <property type="resolution" value="9.50 A"/>
    <property type="chains" value="N=1-127"/>
</dbReference>
<dbReference type="PDB" id="7PJV">
    <property type="method" value="EM"/>
    <property type="resolution" value="3.10 A"/>
    <property type="chains" value="N=1-127"/>
</dbReference>
<dbReference type="PDB" id="7PJW">
    <property type="method" value="EM"/>
    <property type="resolution" value="4.00 A"/>
    <property type="chains" value="N=1-127"/>
</dbReference>
<dbReference type="PDB" id="7PJX">
    <property type="method" value="EM"/>
    <property type="resolution" value="6.50 A"/>
    <property type="chains" value="N=1-127"/>
</dbReference>
<dbReference type="PDB" id="7PJY">
    <property type="method" value="EM"/>
    <property type="resolution" value="3.10 A"/>
    <property type="chains" value="N=1-127"/>
</dbReference>
<dbReference type="PDB" id="7PJZ">
    <property type="method" value="EM"/>
    <property type="resolution" value="6.00 A"/>
    <property type="chains" value="N=1-127"/>
</dbReference>
<dbReference type="PDB" id="7Q4K">
    <property type="method" value="EM"/>
    <property type="resolution" value="3.00 A"/>
    <property type="chains" value="BN=1-127"/>
</dbReference>
<dbReference type="PDB" id="7QG8">
    <property type="method" value="EM"/>
    <property type="resolution" value="3.97 A"/>
    <property type="chains" value="a=1-127"/>
</dbReference>
<dbReference type="PDB" id="7QGH">
    <property type="method" value="EM"/>
    <property type="resolution" value="4.48 A"/>
    <property type="chains" value="a=1-127"/>
</dbReference>
<dbReference type="PDB" id="7QGN">
    <property type="method" value="EM"/>
    <property type="resolution" value="3.37 A"/>
    <property type="chains" value="a=1-127"/>
</dbReference>
<dbReference type="PDB" id="7QGR">
    <property type="method" value="EM"/>
    <property type="resolution" value="5.70 A"/>
    <property type="chains" value="a=1-127"/>
</dbReference>
<dbReference type="PDB" id="7QQ3">
    <property type="method" value="EM"/>
    <property type="resolution" value="2.10 A"/>
    <property type="chains" value="V=1-127"/>
</dbReference>
<dbReference type="PDB" id="7S1G">
    <property type="method" value="EM"/>
    <property type="resolution" value="2.48 A"/>
    <property type="chains" value="V=1-127"/>
</dbReference>
<dbReference type="PDB" id="7S1H">
    <property type="method" value="EM"/>
    <property type="resolution" value="2.35 A"/>
    <property type="chains" value="V=1-127"/>
</dbReference>
<dbReference type="PDB" id="7S1I">
    <property type="method" value="EM"/>
    <property type="resolution" value="2.48 A"/>
    <property type="chains" value="V=1-127"/>
</dbReference>
<dbReference type="PDB" id="7S1J">
    <property type="method" value="EM"/>
    <property type="resolution" value="2.47 A"/>
    <property type="chains" value="V=1-127"/>
</dbReference>
<dbReference type="PDB" id="7S1K">
    <property type="method" value="EM"/>
    <property type="resolution" value="2.42 A"/>
    <property type="chains" value="V=1-127"/>
</dbReference>
<dbReference type="PDB" id="7SA4">
    <property type="method" value="EM"/>
    <property type="resolution" value="2.55 A"/>
    <property type="chains" value="N=1-127"/>
</dbReference>
<dbReference type="PDB" id="7SS9">
    <property type="method" value="EM"/>
    <property type="resolution" value="3.90 A"/>
    <property type="chains" value="n=1-120"/>
</dbReference>
<dbReference type="PDB" id="7SSD">
    <property type="method" value="EM"/>
    <property type="resolution" value="3.30 A"/>
    <property type="chains" value="n=1-120"/>
</dbReference>
<dbReference type="PDB" id="7SSL">
    <property type="method" value="EM"/>
    <property type="resolution" value="3.80 A"/>
    <property type="chains" value="n=1-120"/>
</dbReference>
<dbReference type="PDB" id="7SSN">
    <property type="method" value="EM"/>
    <property type="resolution" value="3.20 A"/>
    <property type="chains" value="n=1-120"/>
</dbReference>
<dbReference type="PDB" id="7SSO">
    <property type="method" value="EM"/>
    <property type="resolution" value="3.20 A"/>
    <property type="chains" value="n=1-120"/>
</dbReference>
<dbReference type="PDB" id="7SSW">
    <property type="method" value="EM"/>
    <property type="resolution" value="3.80 A"/>
    <property type="chains" value="n=1-120"/>
</dbReference>
<dbReference type="PDB" id="7ST2">
    <property type="method" value="EM"/>
    <property type="resolution" value="2.90 A"/>
    <property type="chains" value="n=1-120"/>
</dbReference>
<dbReference type="PDB" id="7ST6">
    <property type="method" value="EM"/>
    <property type="resolution" value="3.00 A"/>
    <property type="chains" value="n=1-120"/>
</dbReference>
<dbReference type="PDB" id="7ST7">
    <property type="method" value="EM"/>
    <property type="resolution" value="3.20 A"/>
    <property type="chains" value="n=1-120"/>
</dbReference>
<dbReference type="PDB" id="7TOS">
    <property type="method" value="EM"/>
    <property type="resolution" value="2.90 A"/>
    <property type="chains" value="L17=1-120"/>
</dbReference>
<dbReference type="PDB" id="7UG7">
    <property type="method" value="EM"/>
    <property type="resolution" value="2.58 A"/>
    <property type="chains" value="LQ=1-127"/>
</dbReference>
<dbReference type="PDB" id="7UPH">
    <property type="method" value="EM"/>
    <property type="resolution" value="4.18 A"/>
    <property type="chains" value="V=1-120"/>
</dbReference>
<dbReference type="PDB" id="7Y7C">
    <property type="method" value="EM"/>
    <property type="resolution" value="2.51 A"/>
    <property type="chains" value="m=1-127"/>
</dbReference>
<dbReference type="PDB" id="7Y7D">
    <property type="method" value="EM"/>
    <property type="resolution" value="2.58 A"/>
    <property type="chains" value="m=1-127"/>
</dbReference>
<dbReference type="PDB" id="7Y7E">
    <property type="method" value="EM"/>
    <property type="resolution" value="2.41 A"/>
    <property type="chains" value="m=1-127"/>
</dbReference>
<dbReference type="PDB" id="7Y7F">
    <property type="method" value="EM"/>
    <property type="resolution" value="2.43 A"/>
    <property type="chains" value="m=1-127"/>
</dbReference>
<dbReference type="PDB" id="7Y7G">
    <property type="method" value="EM"/>
    <property type="resolution" value="2.34 A"/>
    <property type="chains" value="m=1-127"/>
</dbReference>
<dbReference type="PDB" id="7Y7H">
    <property type="method" value="EM"/>
    <property type="resolution" value="2.51 A"/>
    <property type="chains" value="m=1-127"/>
</dbReference>
<dbReference type="PDB" id="7Z20">
    <property type="method" value="EM"/>
    <property type="resolution" value="2.29 A"/>
    <property type="chains" value="n=1-127"/>
</dbReference>
<dbReference type="PDB" id="7ZOD">
    <property type="method" value="EM"/>
    <property type="resolution" value="2.56 A"/>
    <property type="chains" value="n=1-127"/>
</dbReference>
<dbReference type="PDB" id="7ZP8">
    <property type="method" value="EM"/>
    <property type="resolution" value="2.20 A"/>
    <property type="chains" value="n=1-127"/>
</dbReference>
<dbReference type="PDB" id="7ZQ5">
    <property type="method" value="EM"/>
    <property type="resolution" value="2.70 A"/>
    <property type="chains" value="n=1-127"/>
</dbReference>
<dbReference type="PDB" id="7ZQ6">
    <property type="method" value="EM"/>
    <property type="resolution" value="2.75 A"/>
    <property type="chains" value="n=1-127"/>
</dbReference>
<dbReference type="PDB" id="7ZTA">
    <property type="method" value="EM"/>
    <property type="resolution" value="2.70 A"/>
    <property type="chains" value="L171=1-118"/>
</dbReference>
<dbReference type="PDB" id="8A3L">
    <property type="method" value="EM"/>
    <property type="resolution" value="3.42 A"/>
    <property type="chains" value="m=1-127"/>
</dbReference>
<dbReference type="PDB" id="8AKN">
    <property type="method" value="EM"/>
    <property type="resolution" value="2.30 A"/>
    <property type="chains" value="m=1-127"/>
</dbReference>
<dbReference type="PDB" id="8AM9">
    <property type="method" value="EM"/>
    <property type="resolution" value="2.80 A"/>
    <property type="chains" value="m=1-127"/>
</dbReference>
<dbReference type="PDB" id="8ANA">
    <property type="method" value="EM"/>
    <property type="resolution" value="2.10 A"/>
    <property type="chains" value="m=1-127"/>
</dbReference>
<dbReference type="PDB" id="8AP4">
    <property type="method" value="EM"/>
    <property type="resolution" value="3.00 A"/>
    <property type="chains" value="m=1-127"/>
</dbReference>
<dbReference type="PDB" id="8AYE">
    <property type="method" value="EM"/>
    <property type="resolution" value="1.96 A"/>
    <property type="chains" value="m=1-127"/>
</dbReference>
<dbReference type="PDB" id="8B0X">
    <property type="method" value="EM"/>
    <property type="resolution" value="1.55 A"/>
    <property type="chains" value="m=1-127"/>
</dbReference>
<dbReference type="PDB" id="8B7Y">
    <property type="method" value="EM"/>
    <property type="resolution" value="3.00 A"/>
    <property type="chains" value="V=1-127"/>
</dbReference>
<dbReference type="PDB" id="8BF7">
    <property type="method" value="EM"/>
    <property type="resolution" value="2.33 A"/>
    <property type="chains" value="K=1-127"/>
</dbReference>
<dbReference type="PDB" id="8BGE">
    <property type="method" value="EM"/>
    <property type="resolution" value="2.11 A"/>
    <property type="chains" value="K=1-127"/>
</dbReference>
<dbReference type="PDB" id="8BGH">
    <property type="method" value="EM"/>
    <property type="resolution" value="2.88 A"/>
    <property type="chains" value="K=1-127"/>
</dbReference>
<dbReference type="PDB" id="8BH4">
    <property type="method" value="EM"/>
    <property type="resolution" value="2.62 A"/>
    <property type="chains" value="K=1-127"/>
</dbReference>
<dbReference type="PDB" id="8BHJ">
    <property type="method" value="EM"/>
    <property type="resolution" value="2.81 A"/>
    <property type="chains" value="K=1-127"/>
</dbReference>
<dbReference type="PDB" id="8BHL">
    <property type="method" value="EM"/>
    <property type="resolution" value="2.21 A"/>
    <property type="chains" value="K=1-127"/>
</dbReference>
<dbReference type="PDB" id="8BHN">
    <property type="method" value="EM"/>
    <property type="resolution" value="2.85 A"/>
    <property type="chains" value="K=1-127"/>
</dbReference>
<dbReference type="PDB" id="8BHP">
    <property type="method" value="EM"/>
    <property type="resolution" value="2.37 A"/>
    <property type="chains" value="K=1-127"/>
</dbReference>
<dbReference type="PDB" id="8BIL">
    <property type="method" value="EM"/>
    <property type="resolution" value="2.04 A"/>
    <property type="chains" value="K=1-127"/>
</dbReference>
<dbReference type="PDB" id="8BIM">
    <property type="method" value="EM"/>
    <property type="resolution" value="2.04 A"/>
    <property type="chains" value="K=1-127"/>
</dbReference>
<dbReference type="PDB" id="8C8X">
    <property type="method" value="EM"/>
    <property type="resolution" value="3.93 A"/>
    <property type="chains" value="N=1-127"/>
</dbReference>
<dbReference type="PDB" id="8C8Y">
    <property type="method" value="EM"/>
    <property type="resolution" value="3.03 A"/>
    <property type="chains" value="N=1-127"/>
</dbReference>
<dbReference type="PDB" id="8C8Z">
    <property type="method" value="EM"/>
    <property type="resolution" value="3.12 A"/>
    <property type="chains" value="N=1-127"/>
</dbReference>
<dbReference type="PDB" id="8C90">
    <property type="method" value="EM"/>
    <property type="resolution" value="3.15 A"/>
    <property type="chains" value="N=1-127"/>
</dbReference>
<dbReference type="PDB" id="8C91">
    <property type="method" value="EM"/>
    <property type="resolution" value="4.19 A"/>
    <property type="chains" value="N=1-127"/>
</dbReference>
<dbReference type="PDB" id="8C92">
    <property type="method" value="EM"/>
    <property type="resolution" value="3.79 A"/>
    <property type="chains" value="N=1-127"/>
</dbReference>
<dbReference type="PDB" id="8C93">
    <property type="method" value="EM"/>
    <property type="resolution" value="4.17 A"/>
    <property type="chains" value="N=1-127"/>
</dbReference>
<dbReference type="PDB" id="8C94">
    <property type="method" value="EM"/>
    <property type="resolution" value="3.80 A"/>
    <property type="chains" value="N=1-127"/>
</dbReference>
<dbReference type="PDB" id="8C96">
    <property type="method" value="EM"/>
    <property type="resolution" value="4.43 A"/>
    <property type="chains" value="N=1-127"/>
</dbReference>
<dbReference type="PDB" id="8C97">
    <property type="method" value="EM"/>
    <property type="resolution" value="4.07 A"/>
    <property type="chains" value="N=1-127"/>
</dbReference>
<dbReference type="PDB" id="8CAM">
    <property type="method" value="EM"/>
    <property type="resolution" value="1.86 A"/>
    <property type="chains" value="m=1-127"/>
</dbReference>
<dbReference type="PDB" id="8CEU">
    <property type="method" value="EM"/>
    <property type="resolution" value="1.83 A"/>
    <property type="chains" value="m=1-127"/>
</dbReference>
<dbReference type="PDB" id="8CGD">
    <property type="method" value="EM"/>
    <property type="resolution" value="1.98 A"/>
    <property type="chains" value="m=1-127"/>
</dbReference>
<dbReference type="PDB" id="8CGK">
    <property type="method" value="EM"/>
    <property type="resolution" value="1.64 A"/>
    <property type="chains" value="m=1-127"/>
</dbReference>
<dbReference type="PDB" id="8CGV">
    <property type="method" value="EM"/>
    <property type="resolution" value="1.66 A"/>
    <property type="chains" value="m=1-127"/>
</dbReference>
<dbReference type="PDB" id="8EIU">
    <property type="method" value="EM"/>
    <property type="resolution" value="2.24 A"/>
    <property type="chains" value="m=1-127"/>
</dbReference>
<dbReference type="PDB" id="8EKC">
    <property type="method" value="EM"/>
    <property type="resolution" value="2.70 A"/>
    <property type="chains" value="P=1-127"/>
</dbReference>
<dbReference type="PDB" id="8EMM">
    <property type="method" value="EM"/>
    <property type="resolution" value="2.10 A"/>
    <property type="chains" value="m=1-127"/>
</dbReference>
<dbReference type="PDB" id="8FIZ">
    <property type="method" value="EM"/>
    <property type="resolution" value="3.80 A"/>
    <property type="chains" value="BV=1-127"/>
</dbReference>
<dbReference type="PDB" id="8FTO">
    <property type="method" value="EM"/>
    <property type="resolution" value="1.85 A"/>
    <property type="chains" value="m=1-127"/>
</dbReference>
<dbReference type="PDB" id="8FZD">
    <property type="method" value="EM"/>
    <property type="resolution" value="3.10 A"/>
    <property type="chains" value="P=1-127"/>
</dbReference>
<dbReference type="PDB" id="8FZE">
    <property type="method" value="EM"/>
    <property type="resolution" value="3.00 A"/>
    <property type="chains" value="P=1-127"/>
</dbReference>
<dbReference type="PDB" id="8FZF">
    <property type="method" value="EM"/>
    <property type="resolution" value="3.20 A"/>
    <property type="chains" value="P=1-127"/>
</dbReference>
<dbReference type="PDB" id="8FZG">
    <property type="method" value="EM"/>
    <property type="resolution" value="3.10 A"/>
    <property type="chains" value="P=1-127"/>
</dbReference>
<dbReference type="PDB" id="8FZH">
    <property type="method" value="EM"/>
    <property type="resolution" value="2.90 A"/>
    <property type="chains" value="P=1-127"/>
</dbReference>
<dbReference type="PDB" id="8FZI">
    <property type="method" value="EM"/>
    <property type="resolution" value="3.10 A"/>
    <property type="chains" value="P=1-127"/>
</dbReference>
<dbReference type="PDB" id="8FZJ">
    <property type="method" value="EM"/>
    <property type="resolution" value="3.00 A"/>
    <property type="chains" value="P=1-127"/>
</dbReference>
<dbReference type="PDB" id="8G2U">
    <property type="method" value="EM"/>
    <property type="resolution" value="3.00 A"/>
    <property type="chains" value="N=1-121"/>
</dbReference>
<dbReference type="PDB" id="8G31">
    <property type="method" value="EM"/>
    <property type="resolution" value="3.20 A"/>
    <property type="chains" value="N=1-121"/>
</dbReference>
<dbReference type="PDB" id="8G34">
    <property type="method" value="EM"/>
    <property type="resolution" value="3.20 A"/>
    <property type="chains" value="N=1-121"/>
</dbReference>
<dbReference type="PDB" id="8G38">
    <property type="method" value="EM"/>
    <property type="resolution" value="3.20 A"/>
    <property type="chains" value="N=1-121"/>
</dbReference>
<dbReference type="PDB" id="8G6W">
    <property type="method" value="EM"/>
    <property type="resolution" value="2.02 A"/>
    <property type="chains" value="m=1-127"/>
</dbReference>
<dbReference type="PDB" id="8G6X">
    <property type="method" value="EM"/>
    <property type="resolution" value="2.31 A"/>
    <property type="chains" value="m=1-127"/>
</dbReference>
<dbReference type="PDB" id="8G6Y">
    <property type="method" value="EM"/>
    <property type="resolution" value="2.09 A"/>
    <property type="chains" value="m=1-127"/>
</dbReference>
<dbReference type="PDB" id="8G7P">
    <property type="method" value="EM"/>
    <property type="resolution" value="2.90 A"/>
    <property type="chains" value="P=1-127"/>
</dbReference>
<dbReference type="PDB" id="8G7Q">
    <property type="method" value="EM"/>
    <property type="resolution" value="3.10 A"/>
    <property type="chains" value="P=1-127"/>
</dbReference>
<dbReference type="PDB" id="8G7R">
    <property type="method" value="EM"/>
    <property type="resolution" value="2.80 A"/>
    <property type="chains" value="P=1-127"/>
</dbReference>
<dbReference type="PDB" id="8G7S">
    <property type="method" value="EM"/>
    <property type="resolution" value="3.10 A"/>
    <property type="chains" value="P=1-127"/>
</dbReference>
<dbReference type="PDB" id="8HSP">
    <property type="method" value="EM"/>
    <property type="resolution" value="2.32 A"/>
    <property type="chains" value="m=1-127"/>
</dbReference>
<dbReference type="PDB" id="8HTZ">
    <property type="method" value="EM"/>
    <property type="resolution" value="2.40 A"/>
    <property type="chains" value="m=1-127"/>
</dbReference>
<dbReference type="PDB" id="8HU1">
    <property type="method" value="EM"/>
    <property type="resolution" value="2.69 A"/>
    <property type="chains" value="m=1-127"/>
</dbReference>
<dbReference type="PDB" id="8IFB">
    <property type="method" value="EM"/>
    <property type="resolution" value="2.43 A"/>
    <property type="chains" value="m=1-127"/>
</dbReference>
<dbReference type="PDB" id="8IFC">
    <property type="method" value="EM"/>
    <property type="resolution" value="2.90 A"/>
    <property type="chains" value="m=1-127"/>
</dbReference>
<dbReference type="PDB" id="8J1Z">
    <property type="method" value="EM"/>
    <property type="resolution" value="2.60 A"/>
    <property type="chains" value="m=1-127"/>
</dbReference>
<dbReference type="PDB" id="8P16">
    <property type="method" value="EM"/>
    <property type="resolution" value="2.77 A"/>
    <property type="chains" value="N=1-127"/>
</dbReference>
<dbReference type="PDB" id="8P17">
    <property type="method" value="EM"/>
    <property type="resolution" value="2.78 A"/>
    <property type="chains" value="N=1-127"/>
</dbReference>
<dbReference type="PDB" id="8P18">
    <property type="method" value="EM"/>
    <property type="resolution" value="2.77 A"/>
    <property type="chains" value="N=1-127"/>
</dbReference>
<dbReference type="PDB" id="8PEG">
    <property type="method" value="EM"/>
    <property type="resolution" value="3.30 A"/>
    <property type="chains" value="q=1-127"/>
</dbReference>
<dbReference type="PDB" id="8PHJ">
    <property type="method" value="EM"/>
    <property type="resolution" value="3.67 A"/>
    <property type="chains" value="m=1-127"/>
</dbReference>
<dbReference type="PDB" id="8PKL">
    <property type="method" value="EM"/>
    <property type="resolution" value="3.09 A"/>
    <property type="chains" value="q=1-127"/>
</dbReference>
<dbReference type="PDB" id="8PVA">
    <property type="method" value="EM"/>
    <property type="resolution" value="4.50 A"/>
    <property type="chains" value="m=1-127"/>
</dbReference>
<dbReference type="PDB" id="8Q4F">
    <property type="method" value="EM"/>
    <property type="resolution" value="3.10 A"/>
    <property type="chains" value="m=1-127"/>
</dbReference>
<dbReference type="PDB" id="8QBT">
    <property type="method" value="EM"/>
    <property type="resolution" value="2.20 A"/>
    <property type="chains" value="N=1-127"/>
</dbReference>
<dbReference type="PDB" id="8QK7">
    <property type="method" value="EM"/>
    <property type="resolution" value="2.77 A"/>
    <property type="chains" value="N=1-127"/>
</dbReference>
<dbReference type="PDB" id="8QOA">
    <property type="method" value="EM"/>
    <property type="resolution" value="2.00 A"/>
    <property type="chains" value="m=1-127"/>
</dbReference>
<dbReference type="PDB" id="8R6C">
    <property type="method" value="EM"/>
    <property type="resolution" value="2.20 A"/>
    <property type="chains" value="m=1-127"/>
</dbReference>
<dbReference type="PDB" id="8R8M">
    <property type="method" value="EM"/>
    <property type="resolution" value="2.40 A"/>
    <property type="chains" value="m=1-127"/>
</dbReference>
<dbReference type="PDB" id="8RPY">
    <property type="method" value="EM"/>
    <property type="resolution" value="2.64 A"/>
    <property type="chains" value="N=1-120"/>
</dbReference>
<dbReference type="PDB" id="8RPZ">
    <property type="method" value="EM"/>
    <property type="resolution" value="2.44 A"/>
    <property type="chains" value="N=1-120"/>
</dbReference>
<dbReference type="PDB" id="8RQ0">
    <property type="method" value="EM"/>
    <property type="resolution" value="2.44 A"/>
    <property type="chains" value="N=1-120"/>
</dbReference>
<dbReference type="PDB" id="8RQ2">
    <property type="method" value="EM"/>
    <property type="resolution" value="2.44 A"/>
    <property type="chains" value="N=1-120"/>
</dbReference>
<dbReference type="PDB" id="8SYL">
    <property type="method" value="EM"/>
    <property type="resolution" value="2.90 A"/>
    <property type="chains" value="P=1-127"/>
</dbReference>
<dbReference type="PDB" id="8T5D">
    <property type="method" value="EM"/>
    <property type="resolution" value="3.20 A"/>
    <property type="chains" value="N=1-121"/>
</dbReference>
<dbReference type="PDB" id="8T5H">
    <property type="method" value="EM"/>
    <property type="resolution" value="3.30 A"/>
    <property type="chains" value="N=1-121"/>
</dbReference>
<dbReference type="PDB" id="8VS9">
    <property type="method" value="EM"/>
    <property type="resolution" value="3.90 A"/>
    <property type="chains" value="L17=1-127"/>
</dbReference>
<dbReference type="PDB" id="8VSA">
    <property type="method" value="EM"/>
    <property type="resolution" value="3.70 A"/>
    <property type="chains" value="L17=1-127"/>
</dbReference>
<dbReference type="PDB" id="8W51">
    <property type="method" value="EM"/>
    <property type="resolution" value="2.40 A"/>
    <property type="chains" value="O=1-127"/>
</dbReference>
<dbReference type="PDB" id="8YUO">
    <property type="method" value="EM"/>
    <property type="resolution" value="2.25 A"/>
    <property type="chains" value="m=1-127"/>
</dbReference>
<dbReference type="PDB" id="8YUP">
    <property type="method" value="EM"/>
    <property type="resolution" value="2.39 A"/>
    <property type="chains" value="m=1-127"/>
</dbReference>
<dbReference type="PDB" id="8YUQ">
    <property type="method" value="EM"/>
    <property type="resolution" value="2.41 A"/>
    <property type="chains" value="m=1-127"/>
</dbReference>
<dbReference type="PDB" id="8YUR">
    <property type="method" value="EM"/>
    <property type="resolution" value="2.47 A"/>
    <property type="chains" value="m=1-127"/>
</dbReference>
<dbReference type="PDB" id="8YUS">
    <property type="method" value="EM"/>
    <property type="resolution" value="2.43 A"/>
    <property type="chains" value="m=1-127"/>
</dbReference>
<dbReference type="PDB" id="9D89">
    <property type="method" value="EM"/>
    <property type="resolution" value="1.95 A"/>
    <property type="chains" value="J=1-118"/>
</dbReference>
<dbReference type="PDB" id="9DYG">
    <property type="method" value="EM"/>
    <property type="resolution" value="5.27 A"/>
    <property type="chains" value="N=1-120"/>
</dbReference>
<dbReference type="PDB" id="9FBV">
    <property type="method" value="EM"/>
    <property type="resolution" value="2.40 A"/>
    <property type="chains" value="m=1-127"/>
</dbReference>
<dbReference type="PDB" id="9GFT">
    <property type="method" value="EM"/>
    <property type="resolution" value="3.10 A"/>
    <property type="chains" value="Ai/a=1-127"/>
</dbReference>
<dbReference type="PDB" id="9GGR">
    <property type="method" value="EM"/>
    <property type="resolution" value="3.20 A"/>
    <property type="chains" value="Ai/a=1-127"/>
</dbReference>
<dbReference type="PDB" id="9H3K">
    <property type="method" value="EM"/>
    <property type="resolution" value="6.62 A"/>
    <property type="chains" value="N=1-120"/>
</dbReference>
<dbReference type="PDB" id="9H3L">
    <property type="method" value="EM"/>
    <property type="resolution" value="5.84 A"/>
    <property type="chains" value="N=1-120"/>
</dbReference>
<dbReference type="PDB" id="9H3M">
    <property type="method" value="EM"/>
    <property type="resolution" value="4.41 A"/>
    <property type="chains" value="N=1-120"/>
</dbReference>
<dbReference type="PDB" id="9H3N">
    <property type="method" value="EM"/>
    <property type="resolution" value="3.69 A"/>
    <property type="chains" value="N=1-120"/>
</dbReference>
<dbReference type="PDB" id="9H3O">
    <property type="method" value="EM"/>
    <property type="resolution" value="4.54 A"/>
    <property type="chains" value="N=1-120"/>
</dbReference>
<dbReference type="PDB" id="9H3P">
    <property type="method" value="EM"/>
    <property type="resolution" value="7.06 A"/>
    <property type="chains" value="N=1-120"/>
</dbReference>
<dbReference type="PDB" id="9H3Q">
    <property type="method" value="EM"/>
    <property type="resolution" value="4.02 A"/>
    <property type="chains" value="N=1-120"/>
</dbReference>
<dbReference type="PDB" id="9H3R">
    <property type="method" value="EM"/>
    <property type="resolution" value="4.12 A"/>
    <property type="chains" value="N=1-120"/>
</dbReference>
<dbReference type="PDB" id="9H3S">
    <property type="method" value="EM"/>
    <property type="resolution" value="4.16 A"/>
    <property type="chains" value="N=1-120"/>
</dbReference>
<dbReference type="PDB" id="9H3T">
    <property type="method" value="EM"/>
    <property type="resolution" value="3.85 A"/>
    <property type="chains" value="N=1-120"/>
</dbReference>
<dbReference type="PDB" id="9H3U">
    <property type="method" value="EM"/>
    <property type="resolution" value="3.47 A"/>
    <property type="chains" value="N=1-120"/>
</dbReference>
<dbReference type="PDB" id="9H3V">
    <property type="method" value="EM"/>
    <property type="resolution" value="3.55 A"/>
    <property type="chains" value="N=1-120"/>
</dbReference>
<dbReference type="PDB" id="9H3W">
    <property type="method" value="EM"/>
    <property type="resolution" value="5.38 A"/>
    <property type="chains" value="N=1-120"/>
</dbReference>
<dbReference type="PDB" id="9H3X">
    <property type="method" value="EM"/>
    <property type="resolution" value="4.12 A"/>
    <property type="chains" value="N=1-120"/>
</dbReference>
<dbReference type="PDB" id="9H3Y">
    <property type="method" value="EM"/>
    <property type="resolution" value="3.09 A"/>
    <property type="chains" value="N=1-120"/>
</dbReference>
<dbReference type="PDB" id="9H3Z">
    <property type="method" value="EM"/>
    <property type="resolution" value="2.98 A"/>
    <property type="chains" value="N=1-120"/>
</dbReference>
<dbReference type="PDB" id="9HA1">
    <property type="method" value="EM"/>
    <property type="resolution" value="4.17 A"/>
    <property type="chains" value="N=1-120"/>
</dbReference>
<dbReference type="PDB" id="9HA2">
    <property type="method" value="EM"/>
    <property type="resolution" value="4.17 A"/>
    <property type="chains" value="N=1-120"/>
</dbReference>
<dbReference type="PDB" id="9HA3">
    <property type="method" value="EM"/>
    <property type="resolution" value="3.62 A"/>
    <property type="chains" value="N=1-120"/>
</dbReference>
<dbReference type="PDB" id="9HA4">
    <property type="method" value="EM"/>
    <property type="resolution" value="4.26 A"/>
    <property type="chains" value="N=1-120"/>
</dbReference>
<dbReference type="PDB" id="9HA5">
    <property type="method" value="EM"/>
    <property type="resolution" value="3.30 A"/>
    <property type="chains" value="N=1-120"/>
</dbReference>
<dbReference type="PDB" id="9HA6">
    <property type="method" value="EM"/>
    <property type="resolution" value="3.08 A"/>
    <property type="chains" value="N=1-120"/>
</dbReference>
<dbReference type="PDB" id="9HA7">
    <property type="method" value="EM"/>
    <property type="resolution" value="4.37 A"/>
    <property type="chains" value="N=1-120"/>
</dbReference>
<dbReference type="PDB" id="9HAI">
    <property type="method" value="EM"/>
    <property type="resolution" value="3.01 A"/>
    <property type="chains" value="N=1-120"/>
</dbReference>
<dbReference type="PDB" id="9HAL">
    <property type="method" value="EM"/>
    <property type="resolution" value="4.49 A"/>
    <property type="chains" value="N=1-120"/>
</dbReference>
<dbReference type="PDB" id="9HAM">
    <property type="method" value="EM"/>
    <property type="resolution" value="5.06 A"/>
    <property type="chains" value="N=1-120"/>
</dbReference>
<dbReference type="PDB" id="9MOR">
    <property type="method" value="EM"/>
    <property type="resolution" value="2.65 A"/>
    <property type="chains" value="N=1-127"/>
</dbReference>
<dbReference type="PDB" id="9MQ4">
    <property type="method" value="EM"/>
    <property type="resolution" value="2.78 A"/>
    <property type="chains" value="N=1-127"/>
</dbReference>
<dbReference type="PDBsum" id="2J28"/>
<dbReference type="PDBsum" id="2RDO"/>
<dbReference type="PDBsum" id="3BBX"/>
<dbReference type="PDBsum" id="3J5L"/>
<dbReference type="PDBsum" id="3J7Z"/>
<dbReference type="PDBsum" id="3J8G"/>
<dbReference type="PDBsum" id="3J9Y"/>
<dbReference type="PDBsum" id="3J9Z"/>
<dbReference type="PDBsum" id="3JA1"/>
<dbReference type="PDBsum" id="3JBU"/>
<dbReference type="PDBsum" id="3JBV"/>
<dbReference type="PDBsum" id="3JCD"/>
<dbReference type="PDBsum" id="3JCE"/>
<dbReference type="PDBsum" id="3JCJ"/>
<dbReference type="PDBsum" id="3JCN"/>
<dbReference type="PDBsum" id="4CSU"/>
<dbReference type="PDBsum" id="4U1U"/>
<dbReference type="PDBsum" id="4U1V"/>
<dbReference type="PDBsum" id="4U20"/>
<dbReference type="PDBsum" id="4U24"/>
<dbReference type="PDBsum" id="4U25"/>
<dbReference type="PDBsum" id="4U26"/>
<dbReference type="PDBsum" id="4U27"/>
<dbReference type="PDBsum" id="4UY8"/>
<dbReference type="PDBsum" id="4V47"/>
<dbReference type="PDBsum" id="4V48"/>
<dbReference type="PDBsum" id="4V4H"/>
<dbReference type="PDBsum" id="4V4Q"/>
<dbReference type="PDBsum" id="4V4V"/>
<dbReference type="PDBsum" id="4V4W"/>
<dbReference type="PDBsum" id="4V50"/>
<dbReference type="PDBsum" id="4V52"/>
<dbReference type="PDBsum" id="4V53"/>
<dbReference type="PDBsum" id="4V54"/>
<dbReference type="PDBsum" id="4V55"/>
<dbReference type="PDBsum" id="4V56"/>
<dbReference type="PDBsum" id="4V57"/>
<dbReference type="PDBsum" id="4V5B"/>
<dbReference type="PDBsum" id="4V5H"/>
<dbReference type="PDBsum" id="4V5Y"/>
<dbReference type="PDBsum" id="4V64"/>
<dbReference type="PDBsum" id="4V65"/>
<dbReference type="PDBsum" id="4V66"/>
<dbReference type="PDBsum" id="4V69"/>
<dbReference type="PDBsum" id="4V6C"/>
<dbReference type="PDBsum" id="4V6D"/>
<dbReference type="PDBsum" id="4V6E"/>
<dbReference type="PDBsum" id="4V6K"/>
<dbReference type="PDBsum" id="4V6L"/>
<dbReference type="PDBsum" id="4V6M"/>
<dbReference type="PDBsum" id="4V6N"/>
<dbReference type="PDBsum" id="4V6O"/>
<dbReference type="PDBsum" id="4V6P"/>
<dbReference type="PDBsum" id="4V6Q"/>
<dbReference type="PDBsum" id="4V6R"/>
<dbReference type="PDBsum" id="4V6S"/>
<dbReference type="PDBsum" id="4V6T"/>
<dbReference type="PDBsum" id="4V6V"/>
<dbReference type="PDBsum" id="4V6Y"/>
<dbReference type="PDBsum" id="4V6Z"/>
<dbReference type="PDBsum" id="4V70"/>
<dbReference type="PDBsum" id="4V71"/>
<dbReference type="PDBsum" id="4V72"/>
<dbReference type="PDBsum" id="4V73"/>
<dbReference type="PDBsum" id="4V74"/>
<dbReference type="PDBsum" id="4V75"/>
<dbReference type="PDBsum" id="4V76"/>
<dbReference type="PDBsum" id="4V77"/>
<dbReference type="PDBsum" id="4V78"/>
<dbReference type="PDBsum" id="4V79"/>
<dbReference type="PDBsum" id="4V7A"/>
<dbReference type="PDBsum" id="4V7B"/>
<dbReference type="PDBsum" id="4V7C"/>
<dbReference type="PDBsum" id="4V7D"/>
<dbReference type="PDBsum" id="4V7I"/>
<dbReference type="PDBsum" id="4V7S"/>
<dbReference type="PDBsum" id="4V7T"/>
<dbReference type="PDBsum" id="4V7U"/>
<dbReference type="PDBsum" id="4V7V"/>
<dbReference type="PDBsum" id="4V85"/>
<dbReference type="PDBsum" id="4V89"/>
<dbReference type="PDBsum" id="4V9C"/>
<dbReference type="PDBsum" id="4V9D"/>
<dbReference type="PDBsum" id="4V9O"/>
<dbReference type="PDBsum" id="4V9P"/>
<dbReference type="PDBsum" id="4WF1"/>
<dbReference type="PDBsum" id="4WOI"/>
<dbReference type="PDBsum" id="4WWW"/>
<dbReference type="PDBsum" id="4YBB"/>
<dbReference type="PDBsum" id="5ADY"/>
<dbReference type="PDBsum" id="5AFI"/>
<dbReference type="PDBsum" id="5AKA"/>
<dbReference type="PDBsum" id="5GAD"/>
<dbReference type="PDBsum" id="5GAE"/>
<dbReference type="PDBsum" id="5GAF"/>
<dbReference type="PDBsum" id="5GAG"/>
<dbReference type="PDBsum" id="5GAH"/>
<dbReference type="PDBsum" id="5H5U"/>
<dbReference type="PDBsum" id="5IQR"/>
<dbReference type="PDBsum" id="5IT8"/>
<dbReference type="PDBsum" id="5J5B"/>
<dbReference type="PDBsum" id="5J7L"/>
<dbReference type="PDBsum" id="5J88"/>
<dbReference type="PDBsum" id="5J8A"/>
<dbReference type="PDBsum" id="5J91"/>
<dbReference type="PDBsum" id="5JC9"/>
<dbReference type="PDBsum" id="5JTE"/>
<dbReference type="PDBsum" id="5JU8"/>
<dbReference type="PDBsum" id="5KCR"/>
<dbReference type="PDBsum" id="5KCS"/>
<dbReference type="PDBsum" id="5KPS"/>
<dbReference type="PDBsum" id="5KPV"/>
<dbReference type="PDBsum" id="5KPW"/>
<dbReference type="PDBsum" id="5KPX"/>
<dbReference type="PDBsum" id="5L3P"/>
<dbReference type="PDBsum" id="5LZA"/>
<dbReference type="PDBsum" id="5LZB"/>
<dbReference type="PDBsum" id="5LZC"/>
<dbReference type="PDBsum" id="5LZD"/>
<dbReference type="PDBsum" id="5LZE"/>
<dbReference type="PDBsum" id="5LZF"/>
<dbReference type="PDBsum" id="5MDV"/>
<dbReference type="PDBsum" id="5MDW"/>
<dbReference type="PDBsum" id="5MDY"/>
<dbReference type="PDBsum" id="5MDZ"/>
<dbReference type="PDBsum" id="5MGP"/>
<dbReference type="PDBsum" id="5NCO"/>
<dbReference type="PDBsum" id="5NP6"/>
<dbReference type="PDBsum" id="5NWY"/>
<dbReference type="PDBsum" id="5O2R"/>
<dbReference type="PDBsum" id="5U4I"/>
<dbReference type="PDBsum" id="5U9F"/>
<dbReference type="PDBsum" id="5U9G"/>
<dbReference type="PDBsum" id="5UYK"/>
<dbReference type="PDBsum" id="5UYL"/>
<dbReference type="PDBsum" id="5UYM"/>
<dbReference type="PDBsum" id="5UYN"/>
<dbReference type="PDBsum" id="5UYP"/>
<dbReference type="PDBsum" id="5UYQ"/>
<dbReference type="PDBsum" id="5WDT"/>
<dbReference type="PDBsum" id="5WE4"/>
<dbReference type="PDBsum" id="5WE6"/>
<dbReference type="PDBsum" id="5WF0"/>
<dbReference type="PDBsum" id="5WFK"/>
<dbReference type="PDBsum" id="5WFS"/>
<dbReference type="PDBsum" id="6BU8"/>
<dbReference type="PDBsum" id="6BY1"/>
<dbReference type="PDBsum" id="6C4I"/>
<dbReference type="PDBsum" id="6DNC"/>
<dbReference type="PDBsum" id="6ENF"/>
<dbReference type="PDBsum" id="6ENJ"/>
<dbReference type="PDBsum" id="6ENU"/>
<dbReference type="PDBsum" id="6GBZ"/>
<dbReference type="PDBsum" id="6GC0"/>
<dbReference type="PDBsum" id="6GC4"/>
<dbReference type="PDBsum" id="6GC6"/>
<dbReference type="PDBsum" id="6GC7"/>
<dbReference type="PDBsum" id="6GC8"/>
<dbReference type="PDBsum" id="6GWT"/>
<dbReference type="PDBsum" id="6GXM"/>
<dbReference type="PDBsum" id="6GXN"/>
<dbReference type="PDBsum" id="6GXO"/>
<dbReference type="PDBsum" id="6GXP"/>
<dbReference type="PDBsum" id="6H4N"/>
<dbReference type="PDBsum" id="6H58"/>
<dbReference type="PDBsum" id="6HRM"/>
<dbReference type="PDBsum" id="6I0Y"/>
<dbReference type="PDBsum" id="6I7V"/>
<dbReference type="PDBsum" id="6O9J"/>
<dbReference type="PDBsum" id="6O9K"/>
<dbReference type="PDBsum" id="6OFX"/>
<dbReference type="PDBsum" id="6OG7"/>
<dbReference type="PDBsum" id="6OGF"/>
<dbReference type="PDBsum" id="6OGG"/>
<dbReference type="PDBsum" id="6OGI"/>
<dbReference type="PDBsum" id="6OM6"/>
<dbReference type="PDBsum" id="6ORE"/>
<dbReference type="PDBsum" id="6ORL"/>
<dbReference type="PDBsum" id="6OSK"/>
<dbReference type="PDBsum" id="6OSQ"/>
<dbReference type="PDBsum" id="6OST"/>
<dbReference type="PDBsum" id="6OT3"/>
<dbReference type="PDBsum" id="6OUO"/>
<dbReference type="PDBsum" id="6PJ6"/>
<dbReference type="PDBsum" id="6Q97"/>
<dbReference type="PDBsum" id="6Q98"/>
<dbReference type="PDBsum" id="6Q9A"/>
<dbReference type="PDBsum" id="6QDW"/>
<dbReference type="PDBsum" id="6QUL"/>
<dbReference type="PDBsum" id="6S0K"/>
<dbReference type="PDBsum" id="6SZS"/>
<dbReference type="PDBsum" id="6TBV"/>
<dbReference type="PDBsum" id="6TC3"/>
<dbReference type="PDBsum" id="6U48"/>
<dbReference type="PDBsum" id="6VU3"/>
<dbReference type="PDBsum" id="6VWL"/>
<dbReference type="PDBsum" id="6VWM"/>
<dbReference type="PDBsum" id="6VWN"/>
<dbReference type="PDBsum" id="6VYQ"/>
<dbReference type="PDBsum" id="6VYR"/>
<dbReference type="PDBsum" id="6VYS"/>
<dbReference type="PDBsum" id="6VYT"/>
<dbReference type="PDBsum" id="6VYU"/>
<dbReference type="PDBsum" id="6VYW"/>
<dbReference type="PDBsum" id="6VYX"/>
<dbReference type="PDBsum" id="6VYY"/>
<dbReference type="PDBsum" id="6VYZ"/>
<dbReference type="PDBsum" id="6VZ2"/>
<dbReference type="PDBsum" id="6VZ3"/>
<dbReference type="PDBsum" id="6VZ5"/>
<dbReference type="PDBsum" id="6VZ7"/>
<dbReference type="PDBsum" id="6VZJ"/>
<dbReference type="PDBsum" id="6WD0"/>
<dbReference type="PDBsum" id="6WD1"/>
<dbReference type="PDBsum" id="6WD2"/>
<dbReference type="PDBsum" id="6WD3"/>
<dbReference type="PDBsum" id="6WD4"/>
<dbReference type="PDBsum" id="6WD5"/>
<dbReference type="PDBsum" id="6WD6"/>
<dbReference type="PDBsum" id="6WD7"/>
<dbReference type="PDBsum" id="6WD8"/>
<dbReference type="PDBsum" id="6WD9"/>
<dbReference type="PDBsum" id="6WDA"/>
<dbReference type="PDBsum" id="6WDB"/>
<dbReference type="PDBsum" id="6WDC"/>
<dbReference type="PDBsum" id="6WDD"/>
<dbReference type="PDBsum" id="6WDE"/>
<dbReference type="PDBsum" id="6WDF"/>
<dbReference type="PDBsum" id="6WDG"/>
<dbReference type="PDBsum" id="6WDH"/>
<dbReference type="PDBsum" id="6WDI"/>
<dbReference type="PDBsum" id="6WDJ"/>
<dbReference type="PDBsum" id="6WDK"/>
<dbReference type="PDBsum" id="6WDL"/>
<dbReference type="PDBsum" id="6WDM"/>
<dbReference type="PDBsum" id="6WNT"/>
<dbReference type="PDBsum" id="6WNV"/>
<dbReference type="PDBsum" id="6WNW"/>
<dbReference type="PDBsum" id="6X6T"/>
<dbReference type="PDBsum" id="6X7F"/>
<dbReference type="PDBsum" id="6X7K"/>
<dbReference type="PDBsum" id="6X9Q"/>
<dbReference type="PDBsum" id="6XDQ"/>
<dbReference type="PDBsum" id="6XDR"/>
<dbReference type="PDBsum" id="6XGF"/>
<dbReference type="PDBsum" id="6XII"/>
<dbReference type="PDBsum" id="6XIJ"/>
<dbReference type="PDBsum" id="6XZ7"/>
<dbReference type="PDBsum" id="6XZA"/>
<dbReference type="PDBsum" id="6XZB"/>
<dbReference type="PDBsum" id="6Y69"/>
<dbReference type="PDBsum" id="6YS3"/>
<dbReference type="PDBsum" id="6YSR"/>
<dbReference type="PDBsum" id="6YSS"/>
<dbReference type="PDBsum" id="6YST"/>
<dbReference type="PDBsum" id="6YSU"/>
<dbReference type="PDBsum" id="6ZTJ"/>
<dbReference type="PDBsum" id="6ZTL"/>
<dbReference type="PDBsum" id="6ZTM"/>
<dbReference type="PDBsum" id="6ZTN"/>
<dbReference type="PDBsum" id="6ZTO"/>
<dbReference type="PDBsum" id="6ZTP"/>
<dbReference type="PDBsum" id="6ZU1"/>
<dbReference type="PDBsum" id="7ABZ"/>
<dbReference type="PDBsum" id="7AC7"/>
<dbReference type="PDBsum" id="7ACJ"/>
<dbReference type="PDBsum" id="7ACR"/>
<dbReference type="PDBsum" id="7B5K"/>
<dbReference type="PDBsum" id="7BL2"/>
<dbReference type="PDBsum" id="7BL3"/>
<dbReference type="PDBsum" id="7BL4"/>
<dbReference type="PDBsum" id="7BL5"/>
<dbReference type="PDBsum" id="7BL6"/>
<dbReference type="PDBsum" id="7BV8"/>
<dbReference type="PDBsum" id="7D6Z"/>
<dbReference type="PDBsum" id="7D80"/>
<dbReference type="PDBsum" id="7JSS"/>
<dbReference type="PDBsum" id="7JSW"/>
<dbReference type="PDBsum" id="7JSZ"/>
<dbReference type="PDBsum" id="7JT1"/>
<dbReference type="PDBsum" id="7JT2"/>
<dbReference type="PDBsum" id="7JT3"/>
<dbReference type="PDBsum" id="7K00"/>
<dbReference type="PDBsum" id="7K50"/>
<dbReference type="PDBsum" id="7K51"/>
<dbReference type="PDBsum" id="7K52"/>
<dbReference type="PDBsum" id="7K53"/>
<dbReference type="PDBsum" id="7K54"/>
<dbReference type="PDBsum" id="7K55"/>
<dbReference type="PDBsum" id="7LV0"/>
<dbReference type="PDBsum" id="7LVK"/>
<dbReference type="PDBsum" id="7M5D"/>
<dbReference type="PDBsum" id="7N1P"/>
<dbReference type="PDBsum" id="7N2C"/>
<dbReference type="PDBsum" id="7N2U"/>
<dbReference type="PDBsum" id="7N2V"/>
<dbReference type="PDBsum" id="7N30"/>
<dbReference type="PDBsum" id="7N31"/>
<dbReference type="PDBsum" id="7NBU"/>
<dbReference type="PDBsum" id="7NWT"/>
<dbReference type="PDBsum" id="7O19"/>
<dbReference type="PDBsum" id="7O1A"/>
<dbReference type="PDBsum" id="7O1C"/>
<dbReference type="PDBsum" id="7ODE"/>
<dbReference type="PDBsum" id="7OIZ"/>
<dbReference type="PDBsum" id="7OJ0"/>
<dbReference type="PDBsum" id="7P3K"/>
<dbReference type="PDBsum" id="7PJS"/>
<dbReference type="PDBsum" id="7PJT"/>
<dbReference type="PDBsum" id="7PJU"/>
<dbReference type="PDBsum" id="7PJV"/>
<dbReference type="PDBsum" id="7PJW"/>
<dbReference type="PDBsum" id="7PJX"/>
<dbReference type="PDBsum" id="7PJY"/>
<dbReference type="PDBsum" id="7PJZ"/>
<dbReference type="PDBsum" id="7Q4K"/>
<dbReference type="PDBsum" id="7QG8"/>
<dbReference type="PDBsum" id="7QGH"/>
<dbReference type="PDBsum" id="7QGN"/>
<dbReference type="PDBsum" id="7QGR"/>
<dbReference type="PDBsum" id="7QQ3"/>
<dbReference type="PDBsum" id="7S1G"/>
<dbReference type="PDBsum" id="7S1H"/>
<dbReference type="PDBsum" id="7S1I"/>
<dbReference type="PDBsum" id="7S1J"/>
<dbReference type="PDBsum" id="7S1K"/>
<dbReference type="PDBsum" id="7SA4"/>
<dbReference type="PDBsum" id="7SS9"/>
<dbReference type="PDBsum" id="7SSD"/>
<dbReference type="PDBsum" id="7SSL"/>
<dbReference type="PDBsum" id="7SSN"/>
<dbReference type="PDBsum" id="7SSO"/>
<dbReference type="PDBsum" id="7SSW"/>
<dbReference type="PDBsum" id="7ST2"/>
<dbReference type="PDBsum" id="7ST6"/>
<dbReference type="PDBsum" id="7ST7"/>
<dbReference type="PDBsum" id="7TOS"/>
<dbReference type="PDBsum" id="7UG7"/>
<dbReference type="PDBsum" id="7UPH"/>
<dbReference type="PDBsum" id="7Y7C"/>
<dbReference type="PDBsum" id="7Y7D"/>
<dbReference type="PDBsum" id="7Y7E"/>
<dbReference type="PDBsum" id="7Y7F"/>
<dbReference type="PDBsum" id="7Y7G"/>
<dbReference type="PDBsum" id="7Y7H"/>
<dbReference type="PDBsum" id="7Z20"/>
<dbReference type="PDBsum" id="7ZOD"/>
<dbReference type="PDBsum" id="7ZP8"/>
<dbReference type="PDBsum" id="7ZQ5"/>
<dbReference type="PDBsum" id="7ZQ6"/>
<dbReference type="PDBsum" id="7ZTA"/>
<dbReference type="PDBsum" id="8A3L"/>
<dbReference type="PDBsum" id="8AKN"/>
<dbReference type="PDBsum" id="8AM9"/>
<dbReference type="PDBsum" id="8ANA"/>
<dbReference type="PDBsum" id="8AP4"/>
<dbReference type="PDBsum" id="8AYE"/>
<dbReference type="PDBsum" id="8B0X"/>
<dbReference type="PDBsum" id="8B7Y"/>
<dbReference type="PDBsum" id="8BF7"/>
<dbReference type="PDBsum" id="8BGE"/>
<dbReference type="PDBsum" id="8BGH"/>
<dbReference type="PDBsum" id="8BH4"/>
<dbReference type="PDBsum" id="8BHJ"/>
<dbReference type="PDBsum" id="8BHL"/>
<dbReference type="PDBsum" id="8BHN"/>
<dbReference type="PDBsum" id="8BHP"/>
<dbReference type="PDBsum" id="8BIL"/>
<dbReference type="PDBsum" id="8BIM"/>
<dbReference type="PDBsum" id="8C8X"/>
<dbReference type="PDBsum" id="8C8Y"/>
<dbReference type="PDBsum" id="8C8Z"/>
<dbReference type="PDBsum" id="8C90"/>
<dbReference type="PDBsum" id="8C91"/>
<dbReference type="PDBsum" id="8C92"/>
<dbReference type="PDBsum" id="8C93"/>
<dbReference type="PDBsum" id="8C94"/>
<dbReference type="PDBsum" id="8C96"/>
<dbReference type="PDBsum" id="8C97"/>
<dbReference type="PDBsum" id="8CAM"/>
<dbReference type="PDBsum" id="8CEU"/>
<dbReference type="PDBsum" id="8CGD"/>
<dbReference type="PDBsum" id="8CGK"/>
<dbReference type="PDBsum" id="8CGV"/>
<dbReference type="PDBsum" id="8EIU"/>
<dbReference type="PDBsum" id="8EKC"/>
<dbReference type="PDBsum" id="8EMM"/>
<dbReference type="PDBsum" id="8FIZ"/>
<dbReference type="PDBsum" id="8FTO"/>
<dbReference type="PDBsum" id="8FZD"/>
<dbReference type="PDBsum" id="8FZE"/>
<dbReference type="PDBsum" id="8FZF"/>
<dbReference type="PDBsum" id="8FZG"/>
<dbReference type="PDBsum" id="8FZH"/>
<dbReference type="PDBsum" id="8FZI"/>
<dbReference type="PDBsum" id="8FZJ"/>
<dbReference type="PDBsum" id="8G2U"/>
<dbReference type="PDBsum" id="8G31"/>
<dbReference type="PDBsum" id="8G34"/>
<dbReference type="PDBsum" id="8G38"/>
<dbReference type="PDBsum" id="8G6W"/>
<dbReference type="PDBsum" id="8G6X"/>
<dbReference type="PDBsum" id="8G6Y"/>
<dbReference type="PDBsum" id="8G7P"/>
<dbReference type="PDBsum" id="8G7Q"/>
<dbReference type="PDBsum" id="8G7R"/>
<dbReference type="PDBsum" id="8G7S"/>
<dbReference type="PDBsum" id="8HSP"/>
<dbReference type="PDBsum" id="8HTZ"/>
<dbReference type="PDBsum" id="8HU1"/>
<dbReference type="PDBsum" id="8IFB"/>
<dbReference type="PDBsum" id="8IFC"/>
<dbReference type="PDBsum" id="8J1Z"/>
<dbReference type="PDBsum" id="8P16"/>
<dbReference type="PDBsum" id="8P17"/>
<dbReference type="PDBsum" id="8P18"/>
<dbReference type="PDBsum" id="8PEG"/>
<dbReference type="PDBsum" id="8PHJ"/>
<dbReference type="PDBsum" id="8PKL"/>
<dbReference type="PDBsum" id="8PVA"/>
<dbReference type="PDBsum" id="8Q4F"/>
<dbReference type="PDBsum" id="8QBT"/>
<dbReference type="PDBsum" id="8QK7"/>
<dbReference type="PDBsum" id="8QOA"/>
<dbReference type="PDBsum" id="8R6C"/>
<dbReference type="PDBsum" id="8R8M"/>
<dbReference type="PDBsum" id="8RPY"/>
<dbReference type="PDBsum" id="8RPZ"/>
<dbReference type="PDBsum" id="8RQ0"/>
<dbReference type="PDBsum" id="8RQ2"/>
<dbReference type="PDBsum" id="8SYL"/>
<dbReference type="PDBsum" id="8T5D"/>
<dbReference type="PDBsum" id="8T5H"/>
<dbReference type="PDBsum" id="8VS9"/>
<dbReference type="PDBsum" id="8VSA"/>
<dbReference type="PDBsum" id="8W51"/>
<dbReference type="PDBsum" id="8YUO"/>
<dbReference type="PDBsum" id="8YUP"/>
<dbReference type="PDBsum" id="8YUQ"/>
<dbReference type="PDBsum" id="8YUR"/>
<dbReference type="PDBsum" id="8YUS"/>
<dbReference type="PDBsum" id="9D89"/>
<dbReference type="PDBsum" id="9DYG"/>
<dbReference type="PDBsum" id="9FBV"/>
<dbReference type="PDBsum" id="9GFT"/>
<dbReference type="PDBsum" id="9GGR"/>
<dbReference type="PDBsum" id="9H3K"/>
<dbReference type="PDBsum" id="9H3L"/>
<dbReference type="PDBsum" id="9H3M"/>
<dbReference type="PDBsum" id="9H3N"/>
<dbReference type="PDBsum" id="9H3O"/>
<dbReference type="PDBsum" id="9H3P"/>
<dbReference type="PDBsum" id="9H3Q"/>
<dbReference type="PDBsum" id="9H3R"/>
<dbReference type="PDBsum" id="9H3S"/>
<dbReference type="PDBsum" id="9H3T"/>
<dbReference type="PDBsum" id="9H3U"/>
<dbReference type="PDBsum" id="9H3V"/>
<dbReference type="PDBsum" id="9H3W"/>
<dbReference type="PDBsum" id="9H3X"/>
<dbReference type="PDBsum" id="9H3Y"/>
<dbReference type="PDBsum" id="9H3Z"/>
<dbReference type="PDBsum" id="9HA1"/>
<dbReference type="PDBsum" id="9HA2"/>
<dbReference type="PDBsum" id="9HA3"/>
<dbReference type="PDBsum" id="9HA4"/>
<dbReference type="PDBsum" id="9HA5"/>
<dbReference type="PDBsum" id="9HA6"/>
<dbReference type="PDBsum" id="9HA7"/>
<dbReference type="PDBsum" id="9HAI"/>
<dbReference type="PDBsum" id="9HAL"/>
<dbReference type="PDBsum" id="9HAM"/>
<dbReference type="PDBsum" id="9MOR"/>
<dbReference type="PDBsum" id="9MQ4"/>
<dbReference type="EMDB" id="EMD-0076"/>
<dbReference type="EMDB" id="EMD-0080"/>
<dbReference type="EMDB" id="EMD-0081"/>
<dbReference type="EMDB" id="EMD-0082"/>
<dbReference type="EMDB" id="EMD-0083"/>
<dbReference type="EMDB" id="EMD-0137"/>
<dbReference type="EMDB" id="EMD-0139"/>
<dbReference type="EMDB" id="EMD-0261"/>
<dbReference type="EMDB" id="EMD-0322"/>
<dbReference type="EMDB" id="EMD-10073"/>
<dbReference type="EMDB" id="EMD-10353"/>
<dbReference type="EMDB" id="EMD-10453"/>
<dbReference type="EMDB" id="EMD-10458"/>
<dbReference type="EMDB" id="EMD-10655"/>
<dbReference type="EMDB" id="EMD-10656"/>
<dbReference type="EMDB" id="EMD-10657"/>
<dbReference type="EMDB" id="EMD-10705"/>
<dbReference type="EMDB" id="EMD-10905"/>
<dbReference type="EMDB" id="EMD-10906"/>
<dbReference type="EMDB" id="EMD-10907"/>
<dbReference type="EMDB" id="EMD-10908"/>
<dbReference type="EMDB" id="EMD-11418"/>
<dbReference type="EMDB" id="EMD-11419"/>
<dbReference type="EMDB" id="EMD-11420"/>
<dbReference type="EMDB" id="EMD-11421"/>
<dbReference type="EMDB" id="EMD-11422"/>
<dbReference type="EMDB" id="EMD-11423"/>
<dbReference type="EMDB" id="EMD-11426"/>
<dbReference type="EMDB" id="EMD-11710"/>
<dbReference type="EMDB" id="EMD-11713"/>
<dbReference type="EMDB" id="EMD-11717"/>
<dbReference type="EMDB" id="EMD-11718"/>
<dbReference type="EMDB" id="EMD-12035"/>
<dbReference type="EMDB" id="EMD-12215"/>
<dbReference type="EMDB" id="EMD-12216"/>
<dbReference type="EMDB" id="EMD-12217"/>
<dbReference type="EMDB" id="EMD-12218"/>
<dbReference type="EMDB" id="EMD-12219"/>
<dbReference type="EMDB" id="EMD-12261"/>
<dbReference type="EMDB" id="EMD-12635"/>
<dbReference type="EMDB" id="EMD-12693"/>
<dbReference type="EMDB" id="EMD-12694"/>
<dbReference type="EMDB" id="EMD-12695"/>
<dbReference type="EMDB" id="EMD-12826"/>
<dbReference type="EMDB" id="EMD-12936"/>
<dbReference type="EMDB" id="EMD-12937"/>
<dbReference type="EMDB" id="EMD-13180"/>
<dbReference type="EMDB" id="EMD-13458"/>
<dbReference type="EMDB" id="EMD-13459"/>
<dbReference type="EMDB" id="EMD-13461"/>
<dbReference type="EMDB" id="EMD-13462"/>
<dbReference type="EMDB" id="EMD-13463"/>
<dbReference type="EMDB" id="EMD-13464"/>
<dbReference type="EMDB" id="EMD-13465"/>
<dbReference type="EMDB" id="EMD-13805"/>
<dbReference type="EMDB" id="EMD-13952"/>
<dbReference type="EMDB" id="EMD-13955"/>
<dbReference type="EMDB" id="EMD-14121"/>
<dbReference type="EMDB" id="EMD-14454"/>
<dbReference type="EMDB" id="EMD-14846"/>
<dbReference type="EMDB" id="EMD-14850"/>
<dbReference type="EMDB" id="EMD-14864"/>
<dbReference type="EMDB" id="EMD-14865"/>
<dbReference type="EMDB" id="EMD-14956"/>
<dbReference type="EMDB" id="EMD-15116"/>
<dbReference type="EMDB" id="EMD-15558"/>
<dbReference type="EMDB" id="EMD-15712"/>
<dbReference type="EMDB" id="EMD-15793"/>
<dbReference type="EMDB" id="EMD-15905"/>
<dbReference type="EMDB" id="EMD-16015"/>
<dbReference type="EMDB" id="EMD-16029"/>
<dbReference type="EMDB" id="EMD-16031"/>
<dbReference type="EMDB" id="EMD-16047"/>
<dbReference type="EMDB" id="EMD-16057"/>
<dbReference type="EMDB" id="EMD-16059"/>
<dbReference type="EMDB" id="EMD-16062"/>
<dbReference type="EMDB" id="EMD-16065"/>
<dbReference type="EMDB" id="EMD-16081"/>
<dbReference type="EMDB" id="EMD-16082"/>
<dbReference type="EMDB" id="EMD-16494"/>
<dbReference type="EMDB" id="EMD-16495"/>
<dbReference type="EMDB" id="EMD-16496"/>
<dbReference type="EMDB" id="EMD-16497"/>
<dbReference type="EMDB" id="EMD-16498"/>
<dbReference type="EMDB" id="EMD-16499"/>
<dbReference type="EMDB" id="EMD-16500"/>
<dbReference type="EMDB" id="EMD-16501"/>
<dbReference type="EMDB" id="EMD-16503"/>
<dbReference type="EMDB" id="EMD-16504"/>
<dbReference type="EMDB" id="EMD-16530"/>
<dbReference type="EMDB" id="EMD-16613"/>
<dbReference type="EMDB" id="EMD-16641"/>
<dbReference type="EMDB" id="EMD-16646"/>
<dbReference type="EMDB" id="EMD-16652"/>
<dbReference type="EMDB" id="EMD-17346"/>
<dbReference type="EMDB" id="EMD-17347"/>
<dbReference type="EMDB" id="EMD-17348"/>
<dbReference type="EMDB" id="EMD-17631"/>
<dbReference type="EMDB" id="EMD-17667"/>
<dbReference type="EMDB" id="EMD-17743"/>
<dbReference type="EMDB" id="EMD-17959"/>
<dbReference type="EMDB" id="EMD-18145"/>
<dbReference type="EMDB" id="EMD-18320"/>
<dbReference type="EMDB" id="EMD-18458"/>
<dbReference type="EMDB" id="EMD-18534"/>
<dbReference type="EMDB" id="EMD-18950"/>
<dbReference type="EMDB" id="EMD-19004"/>
<dbReference type="EMDB" id="EMD-19426"/>
<dbReference type="EMDB" id="EMD-19427"/>
<dbReference type="EMDB" id="EMD-19428"/>
<dbReference type="EMDB" id="EMD-19429"/>
<dbReference type="EMDB" id="EMD-20048"/>
<dbReference type="EMDB" id="EMD-20052"/>
<dbReference type="EMDB" id="EMD-21420"/>
<dbReference type="EMDB" id="EMD-21421"/>
<dbReference type="EMDB" id="EMD-21422"/>
<dbReference type="EMDB" id="EMD-21620"/>
<dbReference type="EMDB" id="EMD-21625"/>
<dbReference type="EMDB" id="EMD-21630"/>
<dbReference type="EMDB" id="EMD-21631"/>
<dbReference type="EMDB" id="EMD-21632"/>
<dbReference type="EMDB" id="EMD-21633"/>
<dbReference type="EMDB" id="EMD-21634"/>
<dbReference type="EMDB" id="EMD-21635"/>
<dbReference type="EMDB" id="EMD-21636"/>
<dbReference type="EMDB" id="EMD-21637"/>
<dbReference type="EMDB" id="EMD-21638"/>
<dbReference type="EMDB" id="EMD-21639"/>
<dbReference type="EMDB" id="EMD-21640"/>
<dbReference type="EMDB" id="EMD-21641"/>
<dbReference type="EMDB" id="EMD-21856"/>
<dbReference type="EMDB" id="EMD-21857"/>
<dbReference type="EMDB" id="EMD-21858"/>
<dbReference type="EMDB" id="EMD-22459"/>
<dbReference type="EMDB" id="EMD-22461"/>
<dbReference type="EMDB" id="EMD-22464"/>
<dbReference type="EMDB" id="EMD-22466"/>
<dbReference type="EMDB" id="EMD-22469"/>
<dbReference type="EMDB" id="EMD-22472"/>
<dbReference type="EMDB" id="EMD-22669"/>
<dbReference type="EMDB" id="EMD-22670"/>
<dbReference type="EMDB" id="EMD-22671"/>
<dbReference type="EMDB" id="EMD-22672"/>
<dbReference type="EMDB" id="EMD-22673"/>
<dbReference type="EMDB" id="EMD-22674"/>
<dbReference type="EMDB" id="EMD-23528"/>
<dbReference type="EMDB" id="EMD-24120"/>
<dbReference type="EMDB" id="EMD-24132"/>
<dbReference type="EMDB" id="EMD-24133"/>
<dbReference type="EMDB" id="EMD-24134"/>
<dbReference type="EMDB" id="EMD-24135"/>
<dbReference type="EMDB" id="EMD-24136"/>
<dbReference type="EMDB" id="EMD-24803"/>
<dbReference type="EMDB" id="EMD-25405"/>
<dbReference type="EMDB" id="EMD-25407"/>
<dbReference type="EMDB" id="EMD-25409"/>
<dbReference type="EMDB" id="EMD-25410"/>
<dbReference type="EMDB" id="EMD-25411"/>
<dbReference type="EMDB" id="EMD-25415"/>
<dbReference type="EMDB" id="EMD-25418"/>
<dbReference type="EMDB" id="EMD-25420"/>
<dbReference type="EMDB" id="EMD-25421"/>
<dbReference type="EMDB" id="EMD-30215"/>
<dbReference type="EMDB" id="EMD-30598"/>
<dbReference type="EMDB" id="EMD-30611"/>
<dbReference type="EMDB" id="EMD-33660"/>
<dbReference type="EMDB" id="EMD-33661"/>
<dbReference type="EMDB" id="EMD-33662"/>
<dbReference type="EMDB" id="EMD-33663"/>
<dbReference type="EMDB" id="EMD-33664"/>
<dbReference type="EMDB" id="EMD-33665"/>
<dbReference type="EMDB" id="EMD-3489"/>
<dbReference type="EMDB" id="EMD-3490"/>
<dbReference type="EMDB" id="EMD-3492"/>
<dbReference type="EMDB" id="EMD-3493"/>
<dbReference type="EMDB" id="EMD-35001"/>
<dbReference type="EMDB" id="EMD-35020"/>
<dbReference type="EMDB" id="EMD-35022"/>
<dbReference type="EMDB" id="EMD-3508"/>
<dbReference type="EMDB" id="EMD-35411"/>
<dbReference type="EMDB" id="EMD-35412"/>
<dbReference type="EMDB" id="EMD-35939"/>
<dbReference type="EMDB" id="EMD-3617"/>
<dbReference type="EMDB" id="EMD-3713"/>
<dbReference type="EMDB" id="EMD-37271"/>
<dbReference type="EMDB" id="EMD-3730"/>
<dbReference type="EMDB" id="EMD-3898"/>
<dbReference type="EMDB" id="EMD-3899"/>
<dbReference type="EMDB" id="EMD-3903"/>
<dbReference type="EMDB" id="EMD-39577"/>
<dbReference type="EMDB" id="EMD-39578"/>
<dbReference type="EMDB" id="EMD-39579"/>
<dbReference type="EMDB" id="EMD-39580"/>
<dbReference type="EMDB" id="EMD-39581"/>
<dbReference type="EMDB" id="EMD-4001"/>
<dbReference type="EMDB" id="EMD-4121"/>
<dbReference type="EMDB" id="EMD-4122"/>
<dbReference type="EMDB" id="EMD-4123"/>
<dbReference type="EMDB" id="EMD-4124"/>
<dbReference type="EMDB" id="EMD-4125"/>
<dbReference type="EMDB" id="EMD-4126"/>
<dbReference type="EMDB" id="EMD-4378"/>
<dbReference type="EMDB" id="EMD-4379"/>
<dbReference type="EMDB" id="EMD-4380"/>
<dbReference type="EMDB" id="EMD-4381"/>
<dbReference type="EMDB" id="EMD-4382"/>
<dbReference type="EMDB" id="EMD-4383"/>
<dbReference type="EMDB" id="EMD-4476"/>
<dbReference type="EMDB" id="EMD-4477"/>
<dbReference type="EMDB" id="EMD-4478"/>
<dbReference type="EMDB" id="EMD-4638"/>
<dbReference type="EMDB" id="EMD-47303"/>
<dbReference type="EMDB" id="EMD-48479"/>
<dbReference type="EMDB" id="EMD-48513"/>
<dbReference type="EMDB" id="EMD-50296"/>
<dbReference type="EMDB" id="EMD-51318"/>
<dbReference type="EMDB" id="EMD-51340"/>
<dbReference type="EMDB" id="EMD-51828"/>
<dbReference type="EMDB" id="EMD-51829"/>
<dbReference type="EMDB" id="EMD-51830"/>
<dbReference type="EMDB" id="EMD-51831"/>
<dbReference type="EMDB" id="EMD-51832"/>
<dbReference type="EMDB" id="EMD-51833"/>
<dbReference type="EMDB" id="EMD-51834"/>
<dbReference type="EMDB" id="EMD-51835"/>
<dbReference type="EMDB" id="EMD-51836"/>
<dbReference type="EMDB" id="EMD-51837"/>
<dbReference type="EMDB" id="EMD-51838"/>
<dbReference type="EMDB" id="EMD-51839"/>
<dbReference type="EMDB" id="EMD-51840"/>
<dbReference type="EMDB" id="EMD-51841"/>
<dbReference type="EMDB" id="EMD-51842"/>
<dbReference type="EMDB" id="EMD-51843"/>
<dbReference type="EMDB" id="EMD-51973"/>
<dbReference type="EMDB" id="EMD-51974"/>
<dbReference type="EMDB" id="EMD-51975"/>
<dbReference type="EMDB" id="EMD-51976"/>
<dbReference type="EMDB" id="EMD-51977"/>
<dbReference type="EMDB" id="EMD-51978"/>
<dbReference type="EMDB" id="EMD-51979"/>
<dbReference type="EMDB" id="EMD-51981"/>
<dbReference type="EMDB" id="EMD-51982"/>
<dbReference type="EMDB" id="EMD-51983"/>
<dbReference type="EMDB" id="EMD-6667"/>
<dbReference type="EMDB" id="EMD-7289"/>
<dbReference type="EMDB" id="EMD-7341"/>
<dbReference type="EMDB" id="EMD-8000"/>
<dbReference type="EMDB" id="EMD-8001"/>
<dbReference type="EMDB" id="EMD-8002"/>
<dbReference type="EMDB" id="EMD-8003"/>
<dbReference type="EMDB" id="EMD-8004"/>
<dbReference type="EMDB" id="EMD-8107"/>
<dbReference type="EMDB" id="EMD-8175"/>
<dbReference type="EMDB" id="EMD-8176"/>
<dbReference type="EMDB" id="EMD-8237"/>
<dbReference type="EMDB" id="EMD-8238"/>
<dbReference type="EMDB" id="EMD-8279"/>
<dbReference type="EMDB" id="EMD-8280"/>
<dbReference type="EMDB" id="EMD-8281"/>
<dbReference type="EMDB" id="EMD-8282"/>
<dbReference type="EMDB" id="EMD-8505"/>
<dbReference type="EMDB" id="EMD-8615"/>
<dbReference type="EMDB" id="EMD-8616"/>
<dbReference type="EMDB" id="EMD-8617"/>
<dbReference type="EMDB" id="EMD-8618"/>
<dbReference type="EMDB" id="EMD-8619"/>
<dbReference type="EMDB" id="EMD-8620"/>
<dbReference type="EMDB" id="EMD-8813"/>
<dbReference type="EMDB" id="EMD-8814"/>
<dbReference type="EMDB" id="EMD-8815"/>
<dbReference type="EMDB" id="EMD-8828"/>
<dbReference type="SMR" id="P0AG44"/>
<dbReference type="BioGRID" id="4263430">
    <property type="interactions" value="144"/>
</dbReference>
<dbReference type="BioGRID" id="852096">
    <property type="interactions" value="1"/>
</dbReference>
<dbReference type="ComplexPortal" id="CPX-3807">
    <property type="entry name" value="50S large ribosomal subunit"/>
</dbReference>
<dbReference type="DIP" id="DIP-35801N"/>
<dbReference type="FunCoup" id="P0AG44">
    <property type="interactions" value="1171"/>
</dbReference>
<dbReference type="IntAct" id="P0AG44">
    <property type="interactions" value="148"/>
</dbReference>
<dbReference type="STRING" id="511145.b3294"/>
<dbReference type="jPOST" id="P0AG44"/>
<dbReference type="PaxDb" id="511145-b3294"/>
<dbReference type="EnsemblBacteria" id="AAC76319">
    <property type="protein sequence ID" value="AAC76319"/>
    <property type="gene ID" value="b3294"/>
</dbReference>
<dbReference type="GeneID" id="947784"/>
<dbReference type="GeneID" id="97442834"/>
<dbReference type="KEGG" id="ecj:JW3256"/>
<dbReference type="KEGG" id="eco:b3294"/>
<dbReference type="KEGG" id="ecoc:C3026_17910"/>
<dbReference type="PATRIC" id="fig|1411691.4.peg.3437"/>
<dbReference type="EchoBASE" id="EB0871"/>
<dbReference type="eggNOG" id="COG0203">
    <property type="taxonomic scope" value="Bacteria"/>
</dbReference>
<dbReference type="HOGENOM" id="CLU_074407_2_0_6"/>
<dbReference type="InParanoid" id="P0AG44"/>
<dbReference type="OMA" id="EHKRINT"/>
<dbReference type="OrthoDB" id="9809073at2"/>
<dbReference type="PhylomeDB" id="P0AG44"/>
<dbReference type="BioCyc" id="EcoCyc:EG10878-MONOMER"/>
<dbReference type="BioCyc" id="MetaCyc:EG10878-MONOMER"/>
<dbReference type="EvolutionaryTrace" id="P0AG44"/>
<dbReference type="PRO" id="PR:P0AG44"/>
<dbReference type="Proteomes" id="UP000000625">
    <property type="component" value="Chromosome"/>
</dbReference>
<dbReference type="GO" id="GO:0005737">
    <property type="term" value="C:cytoplasm"/>
    <property type="evidence" value="ECO:0000314"/>
    <property type="project" value="ComplexPortal"/>
</dbReference>
<dbReference type="GO" id="GO:0005829">
    <property type="term" value="C:cytosol"/>
    <property type="evidence" value="ECO:0000314"/>
    <property type="project" value="EcoCyc"/>
</dbReference>
<dbReference type="GO" id="GO:0022625">
    <property type="term" value="C:cytosolic large ribosomal subunit"/>
    <property type="evidence" value="ECO:0000314"/>
    <property type="project" value="CAFA"/>
</dbReference>
<dbReference type="GO" id="GO:0003735">
    <property type="term" value="F:structural constituent of ribosome"/>
    <property type="evidence" value="ECO:0000314"/>
    <property type="project" value="CAFA"/>
</dbReference>
<dbReference type="GO" id="GO:0002181">
    <property type="term" value="P:cytoplasmic translation"/>
    <property type="evidence" value="ECO:0000303"/>
    <property type="project" value="ComplexPortal"/>
</dbReference>
<dbReference type="GO" id="GO:0000027">
    <property type="term" value="P:ribosomal large subunit assembly"/>
    <property type="evidence" value="ECO:0000314"/>
    <property type="project" value="CAFA"/>
</dbReference>
<dbReference type="FunFam" id="3.90.1030.10:FF:000001">
    <property type="entry name" value="50S ribosomal protein L17"/>
    <property type="match status" value="1"/>
</dbReference>
<dbReference type="Gene3D" id="3.90.1030.10">
    <property type="entry name" value="Ribosomal protein L17"/>
    <property type="match status" value="1"/>
</dbReference>
<dbReference type="HAMAP" id="MF_01368">
    <property type="entry name" value="Ribosomal_bL17"/>
    <property type="match status" value="1"/>
</dbReference>
<dbReference type="InterPro" id="IPR000456">
    <property type="entry name" value="Ribosomal_bL17"/>
</dbReference>
<dbReference type="InterPro" id="IPR047859">
    <property type="entry name" value="Ribosomal_bL17_CS"/>
</dbReference>
<dbReference type="InterPro" id="IPR036373">
    <property type="entry name" value="Ribosomal_bL17_sf"/>
</dbReference>
<dbReference type="NCBIfam" id="TIGR00059">
    <property type="entry name" value="L17"/>
    <property type="match status" value="1"/>
</dbReference>
<dbReference type="PANTHER" id="PTHR14413:SF16">
    <property type="entry name" value="LARGE RIBOSOMAL SUBUNIT PROTEIN BL17M"/>
    <property type="match status" value="1"/>
</dbReference>
<dbReference type="PANTHER" id="PTHR14413">
    <property type="entry name" value="RIBOSOMAL PROTEIN L17"/>
    <property type="match status" value="1"/>
</dbReference>
<dbReference type="Pfam" id="PF01196">
    <property type="entry name" value="Ribosomal_L17"/>
    <property type="match status" value="1"/>
</dbReference>
<dbReference type="SUPFAM" id="SSF64263">
    <property type="entry name" value="Prokaryotic ribosomal protein L17"/>
    <property type="match status" value="1"/>
</dbReference>
<dbReference type="PROSITE" id="PS01167">
    <property type="entry name" value="RIBOSOMAL_L17"/>
    <property type="match status" value="1"/>
</dbReference>
<accession>P0AG44</accession>
<accession>P02416</accession>
<accession>Q2M6V9</accession>
<comment type="function">
    <text evidence="11">Requires L15 for assembly into the 50S subunit.</text>
</comment>
<comment type="subunit">
    <text evidence="2 3 4 5 6 7 8 9 10 12">Part of the 50S ribosomal subunit (PubMed:10094780, PubMed:12809609, PubMed:16272117, PubMed:24844575, PubMed:25310980, PubMed:27906160, PubMed:27906161, PubMed:27934701, Ref.1). Contacts protein L32 (PubMed:2665813).</text>
</comment>
<comment type="interaction">
    <interactant intactId="EBI-544558">
        <id>P0AG44</id>
    </interactant>
    <interactant intactId="EBI-548913">
        <id>P0A6K3</id>
        <label>def</label>
    </interactant>
    <organismsDiffer>false</organismsDiffer>
    <experiments>3</experiments>
</comment>
<comment type="mass spectrometry"/>
<comment type="similarity">
    <text evidence="1">Belongs to the bacterial ribosomal protein bL17 family.</text>
</comment>
<reference key="1">
    <citation type="journal article" date="1982" name="FEBS Lett.">
        <title>The primary structure of protein L17 from the Escherichia coli ribosome.</title>
        <authorList>
            <person name="Rombauts W."/>
            <person name="Feytons V."/>
            <person name="Wittmann-Liebold B."/>
        </authorList>
    </citation>
    <scope>PROTEIN SEQUENCE</scope>
    <scope>SUBUNIT</scope>
</reference>
<reference key="2">
    <citation type="journal article" date="1984" name="Nucleic Acids Res.">
        <title>Nucleotide sequence of the rpoA-rplQ DNA of Escherichia coli: a second regulatory binding site for protein S4?</title>
        <authorList>
            <person name="Meek D.W."/>
            <person name="Hayward R.S."/>
        </authorList>
    </citation>
    <scope>NUCLEOTIDE SEQUENCE [GENOMIC DNA]</scope>
</reference>
<reference key="3">
    <citation type="journal article" date="1985" name="Nucleic Acids Res.">
        <title>Nucleotide sequence of the alpha ribosomal protein operon of Escherichia coli.</title>
        <authorList>
            <person name="Bedwell D.M."/>
            <person name="Davis G.R."/>
            <person name="Gosink M."/>
            <person name="Post L.E."/>
            <person name="Nomura M."/>
            <person name="Kestler H."/>
            <person name="Zengel J.M."/>
            <person name="Lindahl L."/>
        </authorList>
    </citation>
    <scope>NUCLEOTIDE SEQUENCE [GENOMIC DNA]</scope>
    <source>
        <strain>K12</strain>
    </source>
</reference>
<reference key="4">
    <citation type="journal article" date="1997" name="Science">
        <title>The complete genome sequence of Escherichia coli K-12.</title>
        <authorList>
            <person name="Blattner F.R."/>
            <person name="Plunkett G. III"/>
            <person name="Bloch C.A."/>
            <person name="Perna N.T."/>
            <person name="Burland V."/>
            <person name="Riley M."/>
            <person name="Collado-Vides J."/>
            <person name="Glasner J.D."/>
            <person name="Rode C.K."/>
            <person name="Mayhew G.F."/>
            <person name="Gregor J."/>
            <person name="Davis N.W."/>
            <person name="Kirkpatrick H.A."/>
            <person name="Goeden M.A."/>
            <person name="Rose D.J."/>
            <person name="Mau B."/>
            <person name="Shao Y."/>
        </authorList>
    </citation>
    <scope>NUCLEOTIDE SEQUENCE [LARGE SCALE GENOMIC DNA]</scope>
    <source>
        <strain>K12 / MG1655 / ATCC 47076</strain>
    </source>
</reference>
<reference key="5">
    <citation type="journal article" date="2006" name="Mol. Syst. Biol.">
        <title>Highly accurate genome sequences of Escherichia coli K-12 strains MG1655 and W3110.</title>
        <authorList>
            <person name="Hayashi K."/>
            <person name="Morooka N."/>
            <person name="Yamamoto Y."/>
            <person name="Fujita K."/>
            <person name="Isono K."/>
            <person name="Choi S."/>
            <person name="Ohtsubo E."/>
            <person name="Baba T."/>
            <person name="Wanner B.L."/>
            <person name="Mori H."/>
            <person name="Horiuchi T."/>
        </authorList>
    </citation>
    <scope>NUCLEOTIDE SEQUENCE [LARGE SCALE GENOMIC DNA]</scope>
    <source>
        <strain>K12 / W3110 / ATCC 27325 / DSM 5911</strain>
    </source>
</reference>
<reference key="6">
    <citation type="journal article" date="1987" name="J. Biol. Chem.">
        <title>Incorporation of six additional proteins to complete the assembly map of the 50 S subunit from Escherichia coli ribosomes.</title>
        <authorList>
            <person name="Herold M."/>
            <person name="Nierhaus K.H."/>
        </authorList>
    </citation>
    <scope>ASSEMBLY MAP OF THE 50S SUBUNIT</scope>
    <source>
        <strain>K12</strain>
    </source>
</reference>
<reference key="7">
    <citation type="journal article" date="1989" name="Biochemistry">
        <title>Comparative cross-linking study on the 50S ribosomal subunit from Escherichia coli.</title>
        <authorList>
            <person name="Walleczek J."/>
            <person name="Martin T."/>
            <person name="Redl B."/>
            <person name="Stoeffler-Meilicke M."/>
            <person name="Stoeffler G."/>
        </authorList>
    </citation>
    <scope>CROSS-LINKING TO L32</scope>
    <scope>SUBUNIT</scope>
</reference>
<reference key="8">
    <citation type="journal article" date="1997" name="Electrophoresis">
        <title>Escherichia coli proteome analysis using the gene-protein database.</title>
        <authorList>
            <person name="VanBogelen R.A."/>
            <person name="Abshire K.Z."/>
            <person name="Moldover B."/>
            <person name="Olson E.R."/>
            <person name="Neidhardt F.C."/>
        </authorList>
    </citation>
    <scope>IDENTIFICATION BY 2D-GEL</scope>
</reference>
<reference key="9">
    <citation type="journal article" date="1999" name="Anal. Biochem.">
        <title>Observation of Escherichia coli ribosomal proteins and their posttranslational modifications by mass spectrometry.</title>
        <authorList>
            <person name="Arnold R.J."/>
            <person name="Reilly J.P."/>
        </authorList>
    </citation>
    <scope>MASS SPECTROMETRY</scope>
    <scope>SUBUNIT</scope>
    <source>
        <strain>K12 / ATCC 25404 / DSM 5698 / NCIMB 11290</strain>
    </source>
</reference>
<reference key="10">
    <citation type="journal article" date="2014" name="Curr. Opin. Struct. Biol.">
        <title>A new system for naming ribosomal proteins.</title>
        <authorList>
            <person name="Ban N."/>
            <person name="Beckmann R."/>
            <person name="Cate J.H.D."/>
            <person name="Dinman J.D."/>
            <person name="Dragon F."/>
            <person name="Ellis S.R."/>
            <person name="Lafontaine D.L.J."/>
            <person name="Lindahl L."/>
            <person name="Liljas A."/>
            <person name="Lipton J.M."/>
            <person name="McAlear M.A."/>
            <person name="Moore P.B."/>
            <person name="Noller H.F."/>
            <person name="Ortega J."/>
            <person name="Panse V.G."/>
            <person name="Ramakrishnan V."/>
            <person name="Spahn C.M.T."/>
            <person name="Steitz T.A."/>
            <person name="Tchorzewski M."/>
            <person name="Tollervey D."/>
            <person name="Warren A.J."/>
            <person name="Williamson J.R."/>
            <person name="Wilson D."/>
            <person name="Yonath A."/>
            <person name="Yusupov M."/>
        </authorList>
    </citation>
    <scope>NOMENCLATURE</scope>
</reference>
<reference key="11">
    <citation type="journal article" date="2003" name="Cell">
        <title>Study of the structural dynamics of the E. coli 70S ribosome using real-space refinement.</title>
        <authorList>
            <person name="Gao H."/>
            <person name="Sengupta J."/>
            <person name="Valle M."/>
            <person name="Korostelev A."/>
            <person name="Eswar N."/>
            <person name="Stagg S.M."/>
            <person name="Van Roey P."/>
            <person name="Agrawal R.K."/>
            <person name="Harvey S.C."/>
            <person name="Sali A."/>
            <person name="Chapman M.S."/>
            <person name="Frank J."/>
        </authorList>
    </citation>
    <scope>STRUCTURE BY ELECTRON MICROSCOPY (11.50 ANGSTROMS)</scope>
    <scope>SUBUNIT</scope>
    <source>
        <strain>MRE-600</strain>
    </source>
</reference>
<reference key="12">
    <citation type="journal article" date="2005" name="Science">
        <title>Structures of the bacterial ribosome at 3.5 A resolution.</title>
        <authorList>
            <person name="Schuwirth B.S."/>
            <person name="Borovinskaya M.A."/>
            <person name="Hau C.W."/>
            <person name="Zhang W."/>
            <person name="Vila-Sanjurjo A."/>
            <person name="Holton J.M."/>
            <person name="Cate J.H.D."/>
        </authorList>
    </citation>
    <scope>X-RAY CRYSTALLOGRAPHY (3.46 ANGSTROMS) OF 2 DIFFERENT RIBOSOME STRUCTURES</scope>
    <scope>SUBUNIT</scope>
    <source>
        <strain>MRE-600</strain>
    </source>
</reference>
<reference key="13">
    <citation type="journal article" date="2014" name="Cell Rep.">
        <title>Molecular basis for the ribosome functioning as an L-tryptophan sensor.</title>
        <authorList>
            <person name="Bischoff L."/>
            <person name="Berninghausen O."/>
            <person name="Beckmann R."/>
        </authorList>
    </citation>
    <scope>STRUCTURE BY ELECTRON MICROSCOPY (3.80 ANGSTROMS) OF 1-120 IN TNAC-STALLED 50S RIBOSOMAL SUBUNIT</scope>
    <scope>SUBUNIT</scope>
    <source>
        <strain>K12 / A19 / KC6</strain>
    </source>
</reference>
<reference key="14">
    <citation type="journal article" date="2014" name="PLoS Biol.">
        <title>Structural and functional insights into the mode of action of a universally conserved Obg GTPase.</title>
        <authorList>
            <person name="Feng B."/>
            <person name="Mandava C.S."/>
            <person name="Guo Q."/>
            <person name="Wang J."/>
            <person name="Cao W."/>
            <person name="Li N."/>
            <person name="Zhang Y."/>
            <person name="Zhang Y."/>
            <person name="Wang Z."/>
            <person name="Wu J."/>
            <person name="Sanyal S."/>
            <person name="Lei J."/>
            <person name="Gao N."/>
        </authorList>
    </citation>
    <scope>STRUCTURE BY ELECTRON MICROSCOPY (5.5 ANGSTROMS) OF 50S RIBOSOMAL SUBUNIT IN COMPLEX WITH OBGE AND GMP-PNP</scope>
    <scope>SUBUNIT</scope>
</reference>
<reference key="15">
    <citation type="journal article" date="2017" name="Nature">
        <title>Mechanistic insights into the alternative translation termination by ArfA and RF2.</title>
        <authorList>
            <person name="Ma C."/>
            <person name="Kurita D."/>
            <person name="Li N."/>
            <person name="Chen Y."/>
            <person name="Himeno H."/>
            <person name="Gao N."/>
        </authorList>
    </citation>
    <scope>STRUCTURE BY ELECTRON MICROSCOPY (3.0 ANGSTROMS) OF 70S RIBOSOME IN COMPLEX WITH ARFA AND RF2</scope>
    <scope>SUBUNIT</scope>
</reference>
<reference key="16">
    <citation type="journal article" date="2017" name="Nature">
        <title>Structural basis for ArfA-RF2-mediated translation termination on mRNAs lacking stop codons.</title>
        <authorList>
            <person name="Huter P."/>
            <person name="Mueller C."/>
            <person name="Beckert B."/>
            <person name="Arenz S."/>
            <person name="Berninghausen O."/>
            <person name="Beckmann R."/>
            <person name="Wilson D.N."/>
        </authorList>
    </citation>
    <scope>STRUCTURE BY ELECTRON MICROSCOPY (3.1 ANGSTROMS) OF 70S RIBOSOME IN COMPLEX WITH ARFA AND RF2</scope>
    <scope>SUBUNIT</scope>
</reference>
<reference key="17">
    <citation type="journal article" date="2016" name="Science">
        <title>Translational termination without a stop codon.</title>
        <authorList>
            <person name="James N.R."/>
            <person name="Brown A."/>
            <person name="Gordiyenko Y."/>
            <person name="Ramakrishnan V."/>
        </authorList>
    </citation>
    <scope>STRUCTURE BY ELECTRON MICROSCOPY (2.97 ANGSTROMS) OF 70S RIBOSOME IN COMPLEX WITH ARFA AND RF2</scope>
    <scope>SUBUNIT</scope>
</reference>
<reference key="18">
    <citation type="journal article" date="2017" name="Nature">
        <title>Structural basis of co-translational quality control by ArfA and RF2 bound to ribosome.</title>
        <authorList>
            <person name="Zeng F."/>
            <person name="Chen Y."/>
            <person name="Remis J."/>
            <person name="Shekhar M."/>
            <person name="Phillips J.C."/>
            <person name="Tajkhorshid E."/>
            <person name="Jin H."/>
        </authorList>
    </citation>
    <scope>STRUCTURE BY ELECTRON MICROSCOPY (3.52 ANGSTROMS) OF 70S RIBOSOME IN COMPLEX WITH ARFA AND RF2</scope>
    <scope>SUBUNIT</scope>
</reference>
<protein>
    <recommendedName>
        <fullName evidence="1 13">Large ribosomal subunit protein bL17</fullName>
    </recommendedName>
    <alternativeName>
        <fullName>50S ribosomal protein L17</fullName>
    </alternativeName>
</protein>
<organism>
    <name type="scientific">Escherichia coli (strain K12)</name>
    <dbReference type="NCBI Taxonomy" id="83333"/>
    <lineage>
        <taxon>Bacteria</taxon>
        <taxon>Pseudomonadati</taxon>
        <taxon>Pseudomonadota</taxon>
        <taxon>Gammaproteobacteria</taxon>
        <taxon>Enterobacterales</taxon>
        <taxon>Enterobacteriaceae</taxon>
        <taxon>Escherichia</taxon>
    </lineage>
</organism>
<proteinExistence type="evidence at protein level"/>
<keyword id="KW-0002">3D-structure</keyword>
<keyword id="KW-0903">Direct protein sequencing</keyword>
<keyword id="KW-1185">Reference proteome</keyword>
<keyword id="KW-0687">Ribonucleoprotein</keyword>
<keyword id="KW-0689">Ribosomal protein</keyword>